<reference key="1">
    <citation type="journal article" date="1989" name="Cell">
        <title>Molecular cloning, primary structure, and expression of the human growth factor-activatable Na+/H+ antiporter.</title>
        <authorList>
            <person name="Sardet C."/>
            <person name="Franchi A."/>
            <person name="Pouyssegur J."/>
        </authorList>
    </citation>
    <scope>NUCLEOTIDE SEQUENCE [MRNA]</scope>
    <source>
        <tissue>Kidney</tissue>
    </source>
</reference>
<reference key="2">
    <citation type="journal article" date="1990" name="Science">
        <title>Growth factors induce phosphorylation of the Na+/H+ antiporter, glycoprotein of 110 kD.</title>
        <authorList>
            <person name="Sardet C."/>
            <person name="Counillon L."/>
            <person name="Franchi A."/>
            <person name="Pouyssegur J."/>
        </authorList>
    </citation>
    <scope>NUCLEOTIDE SEQUENCE [MRNA]</scope>
    <source>
        <tissue>Kidney</tissue>
    </source>
</reference>
<reference key="3">
    <citation type="journal article" date="1991" name="EMBO J.">
        <title>Molecular cloning and expression of a cDNA encoding the rabbit ileal villus cell basolateral membrane Na+/H+ exchanger.</title>
        <authorList>
            <person name="Tse C.-M."/>
            <person name="Ma A.I."/>
            <person name="Yang V.W."/>
            <person name="Watson A.J.M."/>
            <person name="Levine S."/>
            <person name="Montrose M.H."/>
            <person name="Potter J."/>
            <person name="Sardet C."/>
            <person name="Pouyssegur J."/>
            <person name="Donowitz M."/>
        </authorList>
    </citation>
    <scope>SEQUENCE REVISION</scope>
</reference>
<reference key="4">
    <citation type="journal article" date="1993" name="Mol. Cell. Biochem.">
        <title>Cloning and analysis of the human myocardial Na+/H+ exchanger.</title>
        <authorList>
            <person name="Fliegel L."/>
            <person name="Dyck J.R."/>
            <person name="Wang H."/>
            <person name="Fong C."/>
            <person name="Haworth R.S."/>
        </authorList>
    </citation>
    <scope>NUCLEOTIDE SEQUENCE [MRNA]</scope>
    <source>
        <tissue>Heart</tissue>
    </source>
</reference>
<reference key="5">
    <citation type="journal article" date="2000" name="Cancer Genet. Cytogenet.">
        <title>Silent polymorphisms within the coding region of human sodium/hydrogen exchanger isoform-1 cDNA in peripheral blood mononuclear cells of leukemia patients: a comparison with healthy controls.</title>
        <authorList>
            <person name="Garden O.A."/>
            <person name="Musk P."/>
            <person name="Worthington-White D.A."/>
            <person name="Dewey M.J."/>
            <person name="Rich I.N."/>
        </authorList>
    </citation>
    <scope>NUCLEOTIDE SEQUENCE [MRNA]</scope>
</reference>
<reference key="6">
    <citation type="journal article" date="2006" name="Nature">
        <title>The DNA sequence and biological annotation of human chromosome 1.</title>
        <authorList>
            <person name="Gregory S.G."/>
            <person name="Barlow K.F."/>
            <person name="McLay K.E."/>
            <person name="Kaul R."/>
            <person name="Swarbreck D."/>
            <person name="Dunham A."/>
            <person name="Scott C.E."/>
            <person name="Howe K.L."/>
            <person name="Woodfine K."/>
            <person name="Spencer C.C.A."/>
            <person name="Jones M.C."/>
            <person name="Gillson C."/>
            <person name="Searle S."/>
            <person name="Zhou Y."/>
            <person name="Kokocinski F."/>
            <person name="McDonald L."/>
            <person name="Evans R."/>
            <person name="Phillips K."/>
            <person name="Atkinson A."/>
            <person name="Cooper R."/>
            <person name="Jones C."/>
            <person name="Hall R.E."/>
            <person name="Andrews T.D."/>
            <person name="Lloyd C."/>
            <person name="Ainscough R."/>
            <person name="Almeida J.P."/>
            <person name="Ambrose K.D."/>
            <person name="Anderson F."/>
            <person name="Andrew R.W."/>
            <person name="Ashwell R.I.S."/>
            <person name="Aubin K."/>
            <person name="Babbage A.K."/>
            <person name="Bagguley C.L."/>
            <person name="Bailey J."/>
            <person name="Beasley H."/>
            <person name="Bethel G."/>
            <person name="Bird C.P."/>
            <person name="Bray-Allen S."/>
            <person name="Brown J.Y."/>
            <person name="Brown A.J."/>
            <person name="Buckley D."/>
            <person name="Burton J."/>
            <person name="Bye J."/>
            <person name="Carder C."/>
            <person name="Chapman J.C."/>
            <person name="Clark S.Y."/>
            <person name="Clarke G."/>
            <person name="Clee C."/>
            <person name="Cobley V."/>
            <person name="Collier R.E."/>
            <person name="Corby N."/>
            <person name="Coville G.J."/>
            <person name="Davies J."/>
            <person name="Deadman R."/>
            <person name="Dunn M."/>
            <person name="Earthrowl M."/>
            <person name="Ellington A.G."/>
            <person name="Errington H."/>
            <person name="Frankish A."/>
            <person name="Frankland J."/>
            <person name="French L."/>
            <person name="Garner P."/>
            <person name="Garnett J."/>
            <person name="Gay L."/>
            <person name="Ghori M.R.J."/>
            <person name="Gibson R."/>
            <person name="Gilby L.M."/>
            <person name="Gillett W."/>
            <person name="Glithero R.J."/>
            <person name="Grafham D.V."/>
            <person name="Griffiths C."/>
            <person name="Griffiths-Jones S."/>
            <person name="Grocock R."/>
            <person name="Hammond S."/>
            <person name="Harrison E.S.I."/>
            <person name="Hart E."/>
            <person name="Haugen E."/>
            <person name="Heath P.D."/>
            <person name="Holmes S."/>
            <person name="Holt K."/>
            <person name="Howden P.J."/>
            <person name="Hunt A.R."/>
            <person name="Hunt S.E."/>
            <person name="Hunter G."/>
            <person name="Isherwood J."/>
            <person name="James R."/>
            <person name="Johnson C."/>
            <person name="Johnson D."/>
            <person name="Joy A."/>
            <person name="Kay M."/>
            <person name="Kershaw J.K."/>
            <person name="Kibukawa M."/>
            <person name="Kimberley A.M."/>
            <person name="King A."/>
            <person name="Knights A.J."/>
            <person name="Lad H."/>
            <person name="Laird G."/>
            <person name="Lawlor S."/>
            <person name="Leongamornlert D.A."/>
            <person name="Lloyd D.M."/>
            <person name="Loveland J."/>
            <person name="Lovell J."/>
            <person name="Lush M.J."/>
            <person name="Lyne R."/>
            <person name="Martin S."/>
            <person name="Mashreghi-Mohammadi M."/>
            <person name="Matthews L."/>
            <person name="Matthews N.S.W."/>
            <person name="McLaren S."/>
            <person name="Milne S."/>
            <person name="Mistry S."/>
            <person name="Moore M.J.F."/>
            <person name="Nickerson T."/>
            <person name="O'Dell C.N."/>
            <person name="Oliver K."/>
            <person name="Palmeiri A."/>
            <person name="Palmer S.A."/>
            <person name="Parker A."/>
            <person name="Patel D."/>
            <person name="Pearce A.V."/>
            <person name="Peck A.I."/>
            <person name="Pelan S."/>
            <person name="Phelps K."/>
            <person name="Phillimore B.J."/>
            <person name="Plumb R."/>
            <person name="Rajan J."/>
            <person name="Raymond C."/>
            <person name="Rouse G."/>
            <person name="Saenphimmachak C."/>
            <person name="Sehra H.K."/>
            <person name="Sheridan E."/>
            <person name="Shownkeen R."/>
            <person name="Sims S."/>
            <person name="Skuce C.D."/>
            <person name="Smith M."/>
            <person name="Steward C."/>
            <person name="Subramanian S."/>
            <person name="Sycamore N."/>
            <person name="Tracey A."/>
            <person name="Tromans A."/>
            <person name="Van Helmond Z."/>
            <person name="Wall M."/>
            <person name="Wallis J.M."/>
            <person name="White S."/>
            <person name="Whitehead S.L."/>
            <person name="Wilkinson J.E."/>
            <person name="Willey D.L."/>
            <person name="Williams H."/>
            <person name="Wilming L."/>
            <person name="Wray P.W."/>
            <person name="Wu Z."/>
            <person name="Coulson A."/>
            <person name="Vaudin M."/>
            <person name="Sulston J.E."/>
            <person name="Durbin R.M."/>
            <person name="Hubbard T."/>
            <person name="Wooster R."/>
            <person name="Dunham I."/>
            <person name="Carter N.P."/>
            <person name="McVean G."/>
            <person name="Ross M.T."/>
            <person name="Harrow J."/>
            <person name="Olson M.V."/>
            <person name="Beck S."/>
            <person name="Rogers J."/>
            <person name="Bentley D.R."/>
        </authorList>
    </citation>
    <scope>NUCLEOTIDE SEQUENCE [LARGE SCALE GENOMIC DNA]</scope>
</reference>
<reference key="7">
    <citation type="submission" date="2005-09" db="EMBL/GenBank/DDBJ databases">
        <authorList>
            <person name="Mural R.J."/>
            <person name="Istrail S."/>
            <person name="Sutton G.G."/>
            <person name="Florea L."/>
            <person name="Halpern A.L."/>
            <person name="Mobarry C.M."/>
            <person name="Lippert R."/>
            <person name="Walenz B."/>
            <person name="Shatkay H."/>
            <person name="Dew I."/>
            <person name="Miller J.R."/>
            <person name="Flanigan M.J."/>
            <person name="Edwards N.J."/>
            <person name="Bolanos R."/>
            <person name="Fasulo D."/>
            <person name="Halldorsson B.V."/>
            <person name="Hannenhalli S."/>
            <person name="Turner R."/>
            <person name="Yooseph S."/>
            <person name="Lu F."/>
            <person name="Nusskern D.R."/>
            <person name="Shue B.C."/>
            <person name="Zheng X.H."/>
            <person name="Zhong F."/>
            <person name="Delcher A.L."/>
            <person name="Huson D.H."/>
            <person name="Kravitz S.A."/>
            <person name="Mouchard L."/>
            <person name="Reinert K."/>
            <person name="Remington K.A."/>
            <person name="Clark A.G."/>
            <person name="Waterman M.S."/>
            <person name="Eichler E.E."/>
            <person name="Adams M.D."/>
            <person name="Hunkapiller M.W."/>
            <person name="Myers E.W."/>
            <person name="Venter J.C."/>
        </authorList>
    </citation>
    <scope>NUCLEOTIDE SEQUENCE [LARGE SCALE GENOMIC DNA]</scope>
</reference>
<reference key="8">
    <citation type="journal article" date="2004" name="Genome Res.">
        <title>The status, quality, and expansion of the NIH full-length cDNA project: the Mammalian Gene Collection (MGC).</title>
        <authorList>
            <consortium name="The MGC Project Team"/>
        </authorList>
    </citation>
    <scope>NUCLEOTIDE SEQUENCE [LARGE SCALE MRNA] (ISOFORM 2)</scope>
    <source>
        <tissue>Placenta</tissue>
    </source>
</reference>
<reference key="9">
    <citation type="journal article" date="1982" name="Nature">
        <title>Modifier role of internal H+ in activating the Na+-H+ exchanger in renal microvillus membrane vesicles.</title>
        <authorList>
            <person name="Aronson P.S."/>
            <person name="Nee J."/>
            <person name="Suhm M.A."/>
        </authorList>
    </citation>
    <scope>FUNCTION</scope>
    <scope>TRANSPORTER ACTIVITY</scope>
    <scope>BIOPHYSICOCHEMICAL PROPERTIES</scope>
</reference>
<reference key="10">
    <citation type="journal article" date="1994" name="Biochemistry">
        <title>The Na+/H+ exchanger NHE-1 possesses N- and O-linked glycosylation restricted to the first N-terminal extracellular domain.</title>
        <authorList>
            <person name="Counillon L."/>
            <person name="Pouyssegur J."/>
            <person name="Reithmeier R.A."/>
        </authorList>
    </citation>
    <scope>GLYCOSYLATION AT ASN-75</scope>
    <scope>O-LINKED GLYCOSYLATION</scope>
</reference>
<reference key="11">
    <citation type="journal article" date="1995" name="Pflugers Arch.">
        <title>Expression of the human sodium/proton exchanger NHE-1 in Xenopus laevis oocytes enhances sodium/proton exchange activity and establishes sodium/lithium countertransport.</title>
        <authorList>
            <person name="Busch S."/>
            <person name="Burckhardt B.C."/>
            <person name="Siffert W."/>
        </authorList>
    </citation>
    <scope>FUNCTION</scope>
    <scope>TRANSPORTER ACTIVITY</scope>
</reference>
<reference key="12">
    <citation type="journal article" date="1996" name="Am. J. Physiol.">
        <title>Coimmunoprecipitation of a 24-kDa protein with NHE1, the ubiquitous isoform of the Na+/H+ exchanger.</title>
        <authorList>
            <person name="Goss G."/>
            <person name="Orlowski J."/>
            <person name="Grinstein S."/>
        </authorList>
    </citation>
    <scope>INTERACTION WITH CHP1</scope>
</reference>
<reference key="13">
    <citation type="journal article" date="1996" name="Proc. Natl. Acad. Sci. U.S.A.">
        <title>A calcineurin homologous protein inhibits GTPase-stimulated Na-H exchange.</title>
        <authorList>
            <person name="Lin X."/>
            <person name="Barber D.L."/>
        </authorList>
    </citation>
    <scope>FUNCTION</scope>
    <scope>INTERACTION WITH CHP1</scope>
</reference>
<reference key="14">
    <citation type="journal article" date="1998" name="Am. J. Physiol.">
        <title>Topological analysis of NHE1, the ubiquitous Na+/H+ exchanger using chymotryptic cleavage.</title>
        <authorList>
            <person name="Shrode L.D."/>
            <person name="Gan B.S."/>
            <person name="D'Souza S.J."/>
            <person name="Orlowski J."/>
            <person name="Grinstein S."/>
        </authorList>
    </citation>
    <scope>TOPOLOGY</scope>
</reference>
<reference key="15">
    <citation type="journal article" date="2000" name="J. Biol. Chem.">
        <title>A novel topology model of the human Na(+)/H(+) exchanger isoform 1.</title>
        <authorList>
            <person name="Wakabayashi S."/>
            <person name="Pang T."/>
            <person name="Su X."/>
            <person name="Shigekawa M."/>
        </authorList>
    </citation>
    <scope>TOPOLOGY</scope>
    <scope>MUTAGENESIS OF ARG-180 AND GLN-181</scope>
</reference>
<reference key="16">
    <citation type="journal article" date="2001" name="Eur. J. Biochem.">
        <title>Functional analysis of polar amino-acid residues in membrane associated regions of the NHE1 isoform of the mammalian Na+/H+ exchanger.</title>
        <authorList>
            <person name="Murtazina R."/>
            <person name="Booth B.J."/>
            <person name="Bullis B.L."/>
            <person name="Singh D.N."/>
            <person name="Fliegel L."/>
        </authorList>
    </citation>
    <scope>FUNCTION</scope>
    <scope>TRANSPORTER ACTIVITY</scope>
    <scope>BIOPHYSICOCHEMICAL PROPERTIES</scope>
    <scope>MUTAGENESIS OF GLU-262; ASP-267 AND GLU-391</scope>
</reference>
<reference key="17">
    <citation type="journal article" date="2001" name="Eur. J. Pharmacol.">
        <title>Potent and selective inhibition of the human Na+/H+ exchanger isoform NHE1 by a novel aminoguanidine derivative T-162559.</title>
        <authorList>
            <person name="Kawamoto T."/>
            <person name="Kimura H."/>
            <person name="Kusumoto K."/>
            <person name="Fukumoto S."/>
            <person name="Shiraishi M."/>
            <person name="Watanabe T."/>
            <person name="Sawada H."/>
        </authorList>
    </citation>
    <scope>FUNCTION</scope>
    <scope>TRANSPORTER ACTIVITY</scope>
    <scope>ACTIVITY REGULATION</scope>
</reference>
<reference key="18">
    <citation type="journal article" date="2001" name="FEBS Lett.">
        <title>Human homolog of mouse tescalcin associates with Na(+)/H(+) exchanger type-1.</title>
        <authorList>
            <person name="Mailaender J."/>
            <person name="Mueller-Esterl W."/>
            <person name="Dedio J."/>
        </authorList>
    </citation>
    <scope>INTERACTION WITH TESC</scope>
    <scope>SUBCELLULAR LOCATION</scope>
</reference>
<reference key="19">
    <citation type="journal article" date="2001" name="J. Biol. Chem.">
        <title>Calcineurin homologous protein as an essential cofactor for Na+/H+ exchangers.</title>
        <authorList>
            <person name="Pang T."/>
            <person name="Su X."/>
            <person name="Wakabayashi S."/>
            <person name="Shigekawa M."/>
        </authorList>
    </citation>
    <scope>FUNCTION</scope>
    <scope>TRANSPORTER ACTIVITY</scope>
    <scope>INTERACTION WITH CHP1</scope>
    <scope>MUTAGENESIS OF ILE-518; ILE-522; PHE-526; LEU-527; LEU-530; LEU-531 AND 526-PHE--LEU-531</scope>
</reference>
<reference key="20">
    <citation type="journal article" date="2002" name="J. Biol. Chem.">
        <title>Expression of calcineurin B homologous protein 2 protects serum deprivation-induced cell death by serum-independent activation of Na+/H+ exchanger.</title>
        <authorList>
            <person name="Pang T."/>
            <person name="Wakabayashi S."/>
            <person name="Shigekawa M."/>
        </authorList>
    </citation>
    <scope>INTERACTION WITH CHP2</scope>
</reference>
<reference key="21">
    <citation type="journal article" date="2003" name="Biochemistry">
        <title>The Na+/H+ exchanger cytoplasmic tail: structure, function, and interactions with tescalcin.</title>
        <authorList>
            <person name="Li X."/>
            <person name="Liu Y."/>
            <person name="Kay C.M."/>
            <person name="Muller-Esterl W."/>
            <person name="Fliegel L."/>
        </authorList>
    </citation>
    <scope>INTERACTION WITH TESC AND CALM1</scope>
</reference>
<reference key="22">
    <citation type="journal article" date="2003" name="J. Biol. Chem.">
        <title>Na-H exchange-dependent increase in intracellular pH times G2/M entry and transition.</title>
        <authorList>
            <person name="Putney L.K."/>
            <person name="Barber D.L."/>
        </authorList>
    </citation>
    <scope>FUNCTION</scope>
</reference>
<reference key="23">
    <citation type="journal article" date="2004" name="Biochemistry">
        <title>Role of calcineurin B homologous protein in pH regulation by the Na+/H+ exchanger 1: tightly bound Ca2+ ions as important structural elements.</title>
        <authorList>
            <person name="Pang T."/>
            <person name="Hisamitsu T."/>
            <person name="Mori H."/>
            <person name="Shigekawa M."/>
            <person name="Wakabayashi S."/>
        </authorList>
    </citation>
    <scope>FUNCTION</scope>
    <scope>TRANSPORTER ACTIVITY</scope>
    <scope>INTERACTION WITH CHP1</scope>
    <scope>SUBCELLULAR LOCATION</scope>
</reference>
<reference key="24">
    <citation type="journal article" date="2004" name="Biochemistry">
        <title>Dimeric interaction between the cytoplasmic domains of the Na+/H+ exchanger NHE1 revealed by symmetrical intermolecular cross-linking and selective co-immunoprecipitation.</title>
        <authorList>
            <person name="Hisamitsu T."/>
            <person name="Pang T."/>
            <person name="Shigekawa M."/>
            <person name="Wakabayashi S."/>
        </authorList>
    </citation>
    <scope>SUBUNIT</scope>
</reference>
<reference key="25">
    <citation type="journal article" date="2004" name="Biochem. J.">
        <title>Proline residues in transmembrane segment IV are critical for activity, expression and targeting of the Na+/H+ exchanger isoform 1.</title>
        <authorList>
            <person name="Slepkov E.R."/>
            <person name="Chow S."/>
            <person name="Lemieux M.J."/>
            <person name="Fliegel L."/>
        </authorList>
    </citation>
    <scope>MUTAGENESIS OF PRO-167 AND PRO-168</scope>
    <scope>FUNCTION</scope>
    <scope>TRANSPORTER ACTIVITY</scope>
    <scope>SUBCELLULAR LOCATION</scope>
</reference>
<reference key="26">
    <citation type="journal article" date="2004" name="J. Biol. Chem.">
        <title>The NHE1 Na+/H+ exchanger recruits ezrin/radixin/moesin proteins to regulate Akt-dependent cell survival.</title>
        <authorList>
            <person name="Wu K.L."/>
            <person name="Khan S."/>
            <person name="Lakhe-Reddy S."/>
            <person name="Jarad G."/>
            <person name="Mukherjee A."/>
            <person name="Obejero-Paz C.A."/>
            <person name="Konieczkowski M."/>
            <person name="Sedor J.R."/>
            <person name="Schelling J.R."/>
        </authorList>
    </citation>
    <scope>FUNCTION</scope>
</reference>
<reference key="27">
    <citation type="journal article" date="2006" name="Biochemistry">
        <title>Dimerization is crucial for the function of the Na+/H+ exchanger NHE1.</title>
        <authorList>
            <person name="Hisamitsu T."/>
            <person name="Ben Ammar Y."/>
            <person name="Nakamura T.Y."/>
            <person name="Wakabayashi S."/>
        </authorList>
    </citation>
    <scope>TRANSPORTER ACTIVITY</scope>
    <scope>FUNCTION</scope>
    <scope>SUBUNIT</scope>
    <scope>SUBCELLULAR LOCATION</scope>
    <scope>MUTAGENESIS OF GLU-262 AND GLY-309</scope>
</reference>
<reference key="28">
    <citation type="journal article" date="2007" name="J. Biol. Chem.">
        <title>NHE1 inhibition by amiloride- and benzoylguanidine-type compounds. Inhibitor binding loci deduced from chimeras of NHE1 homologues with endogenous differences in inhibitor sensitivity.</title>
        <authorList>
            <person name="Pedersen S.F."/>
            <person name="King S.A."/>
            <person name="Nygaard E.B."/>
            <person name="Rigor R.R."/>
            <person name="Cala P.M."/>
        </authorList>
    </citation>
    <scope>FUNCTION</scope>
    <scope>ACTIVITY REGULATION</scope>
</reference>
<reference key="29">
    <citation type="journal article" date="2007" name="Science">
        <title>ATM and ATR substrate analysis reveals extensive protein networks responsive to DNA damage.</title>
        <authorList>
            <person name="Matsuoka S."/>
            <person name="Ballif B.A."/>
            <person name="Smogorzewska A."/>
            <person name="McDonald E.R. III"/>
            <person name="Hurov K.E."/>
            <person name="Luo J."/>
            <person name="Bakalarski C.E."/>
            <person name="Zhao Z."/>
            <person name="Solimini N."/>
            <person name="Lerenthal Y."/>
            <person name="Shiloh Y."/>
            <person name="Gygi S.P."/>
            <person name="Elledge S.J."/>
        </authorList>
    </citation>
    <scope>IDENTIFICATION BY MASS SPECTROMETRY [LARGE SCALE ANALYSIS]</scope>
    <source>
        <tissue>Embryonic kidney</tissue>
    </source>
</reference>
<reference key="30">
    <citation type="journal article" date="2008" name="Circ. Res.">
        <title>Protein kinase B/Akt phosphorylates and inhibits the cardiac Na+/H+ exchanger NHE1.</title>
        <authorList>
            <person name="Snabaitis A.K."/>
            <person name="Cuello F."/>
            <person name="Avkiran M."/>
        </authorList>
    </citation>
    <scope>PHOSPHORYLATION AT SER-648</scope>
    <scope>INTERACTION WITH CALM1</scope>
</reference>
<reference key="31">
    <citation type="journal article" date="2008" name="J. Proteome Res.">
        <title>Phosphoproteome of resting human platelets.</title>
        <authorList>
            <person name="Zahedi R.P."/>
            <person name="Lewandrowski U."/>
            <person name="Wiesner J."/>
            <person name="Wortelkamp S."/>
            <person name="Moebius J."/>
            <person name="Schuetz C."/>
            <person name="Walter U."/>
            <person name="Gambaryan S."/>
            <person name="Sickmann A."/>
        </authorList>
    </citation>
    <scope>PHOSPHORYLATION [LARGE SCALE ANALYSIS] AT SER-703</scope>
    <scope>IDENTIFICATION BY MASS SPECTROMETRY [LARGE SCALE ANALYSIS]</scope>
    <source>
        <tissue>Platelet</tissue>
    </source>
</reference>
<reference key="32">
    <citation type="journal article" date="2008" name="Proc. Natl. Acad. Sci. U.S.A.">
        <title>A quantitative atlas of mitotic phosphorylation.</title>
        <authorList>
            <person name="Dephoure N."/>
            <person name="Zhou C."/>
            <person name="Villen J."/>
            <person name="Beausoleil S.A."/>
            <person name="Bakalarski C.E."/>
            <person name="Elledge S.J."/>
            <person name="Gygi S.P."/>
        </authorList>
    </citation>
    <scope>PHOSPHORYLATION [LARGE SCALE ANALYSIS] AT SER-697; SER-703; SER-723; SER-726; SER-729 AND SER-785</scope>
    <scope>IDENTIFICATION BY MASS SPECTROMETRY [LARGE SCALE ANALYSIS]</scope>
    <source>
        <tissue>Cervix carcinoma</tissue>
    </source>
</reference>
<reference key="33">
    <citation type="journal article" date="2009" name="Am. J. Physiol.">
        <title>Nhe1 is a luminal Na+/H+ exchanger in mouse choroid plexus and is targeted to the basolateral membrane in Ncbe/Nbcn2-null mice.</title>
        <authorList>
            <person name="Damkier H.H."/>
            <person name="Prasad V."/>
            <person name="Huebner C.A."/>
            <person name="Praetorius J."/>
        </authorList>
    </citation>
    <scope>SUBCELLULAR LOCATION</scope>
</reference>
<reference key="34">
    <citation type="journal article" date="2009" name="Sci. Signal.">
        <title>Quantitative phosphoproteomic analysis of T cell receptor signaling reveals system-wide modulation of protein-protein interactions.</title>
        <authorList>
            <person name="Mayya V."/>
            <person name="Lundgren D.H."/>
            <person name="Hwang S.-I."/>
            <person name="Rezaul K."/>
            <person name="Wu L."/>
            <person name="Eng J.K."/>
            <person name="Rodionov V."/>
            <person name="Han D.K."/>
        </authorList>
    </citation>
    <scope>PHOSPHORYLATION [LARGE SCALE ANALYSIS] AT SER-703</scope>
    <scope>IDENTIFICATION BY MASS SPECTROMETRY [LARGE SCALE ANALYSIS]</scope>
    <source>
        <tissue>Leukemic T-cell</tissue>
    </source>
</reference>
<reference key="35">
    <citation type="journal article" date="2010" name="Sci. Signal.">
        <title>Quantitative phosphoproteomics reveals widespread full phosphorylation site occupancy during mitosis.</title>
        <authorList>
            <person name="Olsen J.V."/>
            <person name="Vermeulen M."/>
            <person name="Santamaria A."/>
            <person name="Kumar C."/>
            <person name="Miller M.L."/>
            <person name="Jensen L.J."/>
            <person name="Gnad F."/>
            <person name="Cox J."/>
            <person name="Jensen T.S."/>
            <person name="Nigg E.A."/>
            <person name="Brunak S."/>
            <person name="Mann M."/>
        </authorList>
    </citation>
    <scope>PHOSPHORYLATION [LARGE SCALE ANALYSIS] AT SER-703</scope>
    <scope>IDENTIFICATION BY MASS SPECTROMETRY [LARGE SCALE ANALYSIS]</scope>
    <source>
        <tissue>Cervix carcinoma</tissue>
    </source>
</reference>
<reference key="36">
    <citation type="journal article" date="2011" name="Genes Cells">
        <title>Nuclear accumulation of calcineurin B homologous protein 2 (CHP2) results in enhanced proliferation of tumor cells.</title>
        <authorList>
            <person name="Li Q.H."/>
            <person name="Wang L.H."/>
            <person name="Lin Y.N."/>
            <person name="Chang G.Q."/>
            <person name="Li H.W."/>
            <person name="Jin W.N."/>
            <person name="Hu R.H."/>
            <person name="Pang T.X."/>
        </authorList>
    </citation>
    <scope>INTERACTION WITH CHP2</scope>
    <scope>SUBCELLULAR LOCATION</scope>
</reference>
<reference key="37">
    <citation type="journal article" date="2011" name="J. Biol. Chem.">
        <title>Phosphoinositide binding differentially regulates NHE1 Na+/H+ exchanger-dependent proximal tubule cell survival.</title>
        <authorList>
            <person name="Abu Jawdeh B.G."/>
            <person name="Khan S."/>
            <person name="Deschenes I."/>
            <person name="Hoshi M."/>
            <person name="Goel M."/>
            <person name="Lock J.T."/>
            <person name="Shinlapawittayatorn K."/>
            <person name="Babcock G."/>
            <person name="Lakhe-Reddy S."/>
            <person name="DeCaro G."/>
            <person name="Yadav S.P."/>
            <person name="Mohan M.L."/>
            <person name="Naga Prasad S.V."/>
            <person name="Schilling W.P."/>
            <person name="Ficker E."/>
            <person name="Schelling J.R."/>
        </authorList>
    </citation>
    <scope>PHOSPHATIDYLINOSITOL-BINDING</scope>
    <scope>FUNCTION</scope>
    <scope>TRANSPORTER ACTIVITY</scope>
    <scope>ACTIVITY REGULATION</scope>
</reference>
<reference key="38">
    <citation type="journal article" date="2011" name="Sci. Signal.">
        <title>System-wide temporal characterization of the proteome and phosphoproteome of human embryonic stem cell differentiation.</title>
        <authorList>
            <person name="Rigbolt K.T."/>
            <person name="Prokhorova T.A."/>
            <person name="Akimov V."/>
            <person name="Henningsen J."/>
            <person name="Johansen P.T."/>
            <person name="Kratchmarova I."/>
            <person name="Kassem M."/>
            <person name="Mann M."/>
            <person name="Olsen J.V."/>
            <person name="Blagoev B."/>
        </authorList>
    </citation>
    <scope>PHOSPHORYLATION [LARGE SCALE ANALYSIS] AT SER-703</scope>
    <scope>IDENTIFICATION BY MASS SPECTROMETRY [LARGE SCALE ANALYSIS]</scope>
</reference>
<reference key="39">
    <citation type="journal article" date="2013" name="J. Proteome Res.">
        <title>Toward a comprehensive characterization of a human cancer cell phosphoproteome.</title>
        <authorList>
            <person name="Zhou H."/>
            <person name="Di Palma S."/>
            <person name="Preisinger C."/>
            <person name="Peng M."/>
            <person name="Polat A.N."/>
            <person name="Heck A.J."/>
            <person name="Mohammed S."/>
        </authorList>
    </citation>
    <scope>PHOSPHORYLATION [LARGE SCALE ANALYSIS] AT SER-602; SER-605; SER-693; SER-703 AND SER-785</scope>
    <scope>IDENTIFICATION BY MASS SPECTROMETRY [LARGE SCALE ANALYSIS]</scope>
    <source>
        <tissue>Cervix carcinoma</tissue>
        <tissue>Erythroleukemia</tissue>
    </source>
</reference>
<reference key="40">
    <citation type="journal article" date="2014" name="J. Proteomics">
        <title>An enzyme assisted RP-RPLC approach for in-depth analysis of human liver phosphoproteome.</title>
        <authorList>
            <person name="Bian Y."/>
            <person name="Song C."/>
            <person name="Cheng K."/>
            <person name="Dong M."/>
            <person name="Wang F."/>
            <person name="Huang J."/>
            <person name="Sun D."/>
            <person name="Wang L."/>
            <person name="Ye M."/>
            <person name="Zou H."/>
        </authorList>
    </citation>
    <scope>PHOSPHORYLATION [LARGE SCALE ANALYSIS] AT SER-599; SER-602 AND SER-703</scope>
    <scope>IDENTIFICATION BY MASS SPECTROMETRY [LARGE SCALE ANALYSIS]</scope>
    <source>
        <tissue>Liver</tissue>
    </source>
</reference>
<reference key="41">
    <citation type="journal article" date="2016" name="J. Biol. Chem.">
        <title>A Histidine Cluster in the Cytoplasmic Domain of the Na-H Exchanger NHE1 Confers pH-sensitive Phospholipid Binding and Regulates Transporter Activity.</title>
        <authorList>
            <person name="Webb B.A."/>
            <person name="White K.A."/>
            <person name="Grillo-Hill B.K."/>
            <person name="Schoenichen A."/>
            <person name="Choi C."/>
            <person name="Barber D.L."/>
        </authorList>
    </citation>
    <scope>FUNCTION</scope>
    <scope>TRANSPORTER ACTIVITY</scope>
    <scope>PHOSPHATIDYLINOSITOL-BINDING</scope>
</reference>
<reference key="42">
    <citation type="journal article" date="2018" name="Sci. Rep.">
        <title>Calcineurin B homologous protein 3 binds with high affinity to the CHP binding domain of the human sodium/proton exchanger NHE1.</title>
        <authorList>
            <person name="Fuchs S."/>
            <person name="Hansen S.C."/>
            <person name="Markones M."/>
            <person name="Mymrikov E.V."/>
            <person name="Heerklotz H."/>
            <person name="Hunte C."/>
        </authorList>
    </citation>
    <scope>INTERACTION WITH TESC AND CALM1</scope>
    <scope>MUTAGENESIS OF 526-PHE--LEU-531</scope>
</reference>
<reference key="43">
    <citation type="journal article" date="2015" name="Hum. Mol. Genet.">
        <title>Mutation of SLC9A1, encoding the major Na[?]/H[?] exchanger, causes ataxia-deafness Lichtenstein-Knorr syndrome.</title>
        <authorList>
            <person name="Guissart C."/>
            <person name="Li X."/>
            <person name="Leheup B."/>
            <person name="Drouot N."/>
            <person name="Montaut-Verient B."/>
            <person name="Raffo E."/>
            <person name="Jonveaux P."/>
            <person name="Roux A.F."/>
            <person name="Claustres M."/>
            <person name="Fliegel L."/>
            <person name="Koenig M."/>
        </authorList>
    </citation>
    <scope>INVOLVEMENT IN LIKNS</scope>
    <scope>VARIANT LIKNS ARG-305</scope>
    <scope>CHARACTERIZATION OF VARIANT LIKNS ARG-305</scope>
</reference>
<reference key="44">
    <citation type="journal article" date="2005" name="J. Biol. Chem.">
        <title>Structural and functional characterization of transmembrane segment IV of the NHE1 isoform of the Na+/H+ exchanger.</title>
        <authorList>
            <person name="Slepkov E.R."/>
            <person name="Rainey J.K."/>
            <person name="Li X."/>
            <person name="Liu Y."/>
            <person name="Cheng F.J."/>
            <person name="Lindhout D.A."/>
            <person name="Sykes B.D."/>
            <person name="Fliegel L."/>
        </authorList>
    </citation>
    <scope>STRUCTURE BY NMR OF 155-180</scope>
    <scope>MUTAGENESIS OF PHE-155; LEU-156; GLN-157; SER-158; ASP-159; VAL-160; PHE-161; PHE-162; LEU-163; PHE-164; LEU-165; LEU-166; PRO-167; PRO-168; ILE-169; ILE-170; LEU-171; ASP-172; ALA-173; GLY-174; TYR-175; PHE-176 AND LEU-177</scope>
    <scope>FUNCTION</scope>
    <scope>TRANSPORTER ACTIVITY</scope>
    <scope>SUBCELLULAR LOCATION</scope>
</reference>
<reference key="45">
    <citation type="journal article" date="2005" name="Acta Crystallogr. F">
        <title>Crystallization and preliminary crystallographic analysis of the human calcineurin homologous protein CHP2 bound to the cytoplasmic region of the Na+/H+ exchanger NHE1.</title>
        <authorList>
            <person name="Ben Ammar Y."/>
            <person name="Takeda S."/>
            <person name="Sugawara M."/>
            <person name="Miyano M."/>
            <person name="Mori H."/>
            <person name="Wakabayashi S."/>
        </authorList>
    </citation>
    <scope>PRELIMINARY X-RAY CRYSTALLOGRAPHY OF 503-545 IN COMPLEX WITH CHP2</scope>
</reference>
<reference key="46">
    <citation type="journal article" date="2006" name="EMBO J.">
        <title>Crystal structure of CHP2 complexed with NHE1-cytosolic region and an implication for pH regulation.</title>
        <authorList>
            <person name="Ammar Y.B."/>
            <person name="Takeda S."/>
            <person name="Hisamitsu T."/>
            <person name="Mori H."/>
            <person name="Wakabayashi S."/>
        </authorList>
    </citation>
    <scope>X-RAY CRYSTALLOGRAPHY (2.7 ANGSTROMS) OF 503-545 IN COMPLEX WITH CHP2</scope>
    <scope>MUTAGENESIS OF ILE-534 AND ILE-537</scope>
</reference>
<reference key="47">
    <citation type="journal article" date="2007" name="J. Biol. Chem.">
        <title>Solution structure of the cytoplasmic region of Na+/H+ exchanger 1 complexed with essential cofactor calcineurin B homologous protein 1.</title>
        <authorList>
            <person name="Mishima M."/>
            <person name="Wakabayashi S."/>
            <person name="Kojima C."/>
        </authorList>
    </citation>
    <scope>STRUCTURE BY NMR OF 503-545 IN COMPLEX WITH CHP1</scope>
</reference>
<reference key="48">
    <citation type="journal article" date="2020" name="Mol. Cell. Biochem.">
        <title>Acidic residues of extracellular loop 3 of the Na+/H+ exchanger type 1 are important in cation transport.</title>
        <authorList>
            <person name="Li X."/>
            <person name="Quan S."/>
            <person name="Corsiatto T."/>
            <person name="Fliegel L."/>
        </authorList>
    </citation>
    <scope>FUNCTION</scope>
    <scope>TRANSPORTER ACTIVITY</scope>
    <scope>BIOPHYSICOCHEMICAL PROPERTIES</scope>
    <scope>MUTAGENESIS OF GLU-217 AND ASP-226</scope>
    <scope>SUBCELLULAR LOCATION</scope>
</reference>
<reference evidence="46 47 48" key="49">
    <citation type="journal article" date="2019" name="Nat. Commun.">
        <title>Molecular basis for the binding and selective dephosphorylation of Na+/H+ exchanger 1 by calcineurin.</title>
        <authorList>
            <person name="Hendus-Altenburger R."/>
            <person name="Wang X."/>
            <person name="Sjogaard-Frich L.M."/>
            <person name="Pedraz-Cuesta E."/>
            <person name="Sheftic S.R."/>
            <person name="Bendsoe A.H."/>
            <person name="Page R."/>
            <person name="Kragelund B.B."/>
            <person name="Pedersen S.F."/>
            <person name="Peti W."/>
        </authorList>
    </citation>
    <scope>X-RAY CRYSTALLOGRAPHY (1.90 ANGSTROMS) OF 679-723 IN COMPLEX WITH PPP3CA AND PPP3R1</scope>
    <scope>PHOSPHORYLATION AT THR-779</scope>
    <scope>MUTAGENESIS OF THR-779</scope>
</reference>
<reference evidence="49 50 51" key="50">
    <citation type="journal article" date="2021" name="Nat. Commun.">
        <title>Structure and mechanism of the human NHE1-CHP1 complex.</title>
        <authorList>
            <person name="Dong Y."/>
            <person name="Gao Y."/>
            <person name="Ilie A."/>
            <person name="Kim D."/>
            <person name="Boucher A."/>
            <person name="Li B."/>
            <person name="Zhang X.C."/>
            <person name="Orlowski J."/>
            <person name="Zhao Y."/>
        </authorList>
    </citation>
    <scope>STRUCTURE BY ELECTRON MICROSCOPY (3.30 ANGSTROMS) OF 87-506 IN COMPLEX WITH CHP1 AND CARIPORIDE</scope>
    <scope>SUBCELLULAR LOCATION</scope>
    <scope>SUBUNIT</scope>
    <scope>TOPOLOGY</scope>
    <scope>MUTAGENESIS OF ASP-238; TYR-577 AND HIS-578</scope>
</reference>
<reference key="51">
    <citation type="journal article" date="2019" name="Genet. Med.">
        <title>Autozygome and high throughput confirmation of disease genes candidacy.</title>
        <authorList>
            <person name="Maddirevula S."/>
            <person name="Alzahrani F."/>
            <person name="Al-Owain M."/>
            <person name="Al Muhaizea M.A."/>
            <person name="Kayyali H.R."/>
            <person name="AlHashem A."/>
            <person name="Rahbeeni Z."/>
            <person name="Al-Otaibi M."/>
            <person name="Alzaidan H.I."/>
            <person name="Balobaid A."/>
            <person name="El Khashab H.Y."/>
            <person name="Bubshait D.K."/>
            <person name="Faden M."/>
            <person name="Yamani S.A."/>
            <person name="Dabbagh O."/>
            <person name="Al-Mureikhi M."/>
            <person name="Jasser A.A."/>
            <person name="Alsaif H.S."/>
            <person name="Alluhaydan I."/>
            <person name="Seidahmed M.Z."/>
            <person name="Alabbasi B.H."/>
            <person name="Almogarri I."/>
            <person name="Kurdi W."/>
            <person name="Akleh H."/>
            <person name="Qari A."/>
            <person name="Al Tala S.M."/>
            <person name="Alhomaidi S."/>
            <person name="Kentab A.Y."/>
            <person name="Salih M.A."/>
            <person name="Chedrawi A."/>
            <person name="Alameer S."/>
            <person name="Tabarki B."/>
            <person name="Shamseldin H.E."/>
            <person name="Patel N."/>
            <person name="Ibrahim N."/>
            <person name="Abdulwahab F."/>
            <person name="Samira M."/>
            <person name="Goljan E."/>
            <person name="Abouelhoda M."/>
            <person name="Meyer B.F."/>
            <person name="Hashem M."/>
            <person name="Shaheen R."/>
            <person name="AlShahwan S."/>
            <person name="Alfadhel M."/>
            <person name="Ben-Omran T."/>
            <person name="Al-Qattan M.M."/>
            <person name="Monies D."/>
            <person name="Alkuraya F.S."/>
        </authorList>
    </citation>
    <scope>VARIANT LIKNS GLU-313</scope>
</reference>
<keyword id="KW-0002">3D-structure</keyword>
<keyword id="KW-0025">Alternative splicing</keyword>
<keyword id="KW-0050">Antiport</keyword>
<keyword id="KW-0112">Calmodulin-binding</keyword>
<keyword id="KW-1003">Cell membrane</keyword>
<keyword id="KW-0209">Deafness</keyword>
<keyword id="KW-0225">Disease variant</keyword>
<keyword id="KW-0325">Glycoprotein</keyword>
<keyword id="KW-0406">Ion transport</keyword>
<keyword id="KW-0449">Lipoprotein</keyword>
<keyword id="KW-0472">Membrane</keyword>
<keyword id="KW-0523">Neurodegeneration</keyword>
<keyword id="KW-0564">Palmitate</keyword>
<keyword id="KW-0597">Phosphoprotein</keyword>
<keyword id="KW-1267">Proteomics identification</keyword>
<keyword id="KW-1185">Reference proteome</keyword>
<keyword id="KW-0915">Sodium</keyword>
<keyword id="KW-0739">Sodium transport</keyword>
<keyword id="KW-0812">Transmembrane</keyword>
<keyword id="KW-1133">Transmembrane helix</keyword>
<keyword id="KW-0813">Transport</keyword>
<keyword id="KW-0832">Ubl conjugation</keyword>
<accession>P19634</accession>
<accession>B1ALD6</accession>
<accession>D3DPL4</accession>
<accession>Q96EM2</accession>
<dbReference type="EMBL" id="M81768">
    <property type="protein sequence ID" value="AAB59460.1"/>
    <property type="status" value="ALT_SEQ"/>
    <property type="molecule type" value="mRNA"/>
</dbReference>
<dbReference type="EMBL" id="S68616">
    <property type="protein sequence ID" value="AAC60606.1"/>
    <property type="molecule type" value="mRNA"/>
</dbReference>
<dbReference type="EMBL" id="AF141350">
    <property type="protein sequence ID" value="AAF21350.1"/>
    <property type="molecule type" value="mRNA"/>
</dbReference>
<dbReference type="EMBL" id="AF141351">
    <property type="protein sequence ID" value="AAF21351.1"/>
    <property type="molecule type" value="mRNA"/>
</dbReference>
<dbReference type="EMBL" id="AF141352">
    <property type="protein sequence ID" value="AAF21352.1"/>
    <property type="molecule type" value="mRNA"/>
</dbReference>
<dbReference type="EMBL" id="AF141353">
    <property type="protein sequence ID" value="AAF21353.1"/>
    <property type="molecule type" value="mRNA"/>
</dbReference>
<dbReference type="EMBL" id="AF141354">
    <property type="protein sequence ID" value="AAF21354.1"/>
    <property type="molecule type" value="mRNA"/>
</dbReference>
<dbReference type="EMBL" id="AF141355">
    <property type="protein sequence ID" value="AAF21355.1"/>
    <property type="molecule type" value="mRNA"/>
</dbReference>
<dbReference type="EMBL" id="AF141356">
    <property type="protein sequence ID" value="AAF21356.1"/>
    <property type="molecule type" value="mRNA"/>
</dbReference>
<dbReference type="EMBL" id="AF141357">
    <property type="protein sequence ID" value="AAF21357.1"/>
    <property type="molecule type" value="mRNA"/>
</dbReference>
<dbReference type="EMBL" id="AF141358">
    <property type="protein sequence ID" value="AAF21358.1"/>
    <property type="molecule type" value="mRNA"/>
</dbReference>
<dbReference type="EMBL" id="AF141359">
    <property type="protein sequence ID" value="AAF21359.1"/>
    <property type="molecule type" value="mRNA"/>
</dbReference>
<dbReference type="EMBL" id="AF146430">
    <property type="protein sequence ID" value="AAF25592.1"/>
    <property type="molecule type" value="mRNA"/>
</dbReference>
<dbReference type="EMBL" id="AF146431">
    <property type="protein sequence ID" value="AAF25593.1"/>
    <property type="molecule type" value="mRNA"/>
</dbReference>
<dbReference type="EMBL" id="AF146432">
    <property type="protein sequence ID" value="AAF25594.1"/>
    <property type="molecule type" value="mRNA"/>
</dbReference>
<dbReference type="EMBL" id="AF146433">
    <property type="protein sequence ID" value="AAF25595.1"/>
    <property type="molecule type" value="mRNA"/>
</dbReference>
<dbReference type="EMBL" id="AF146434">
    <property type="protein sequence ID" value="AAF25596.1"/>
    <property type="molecule type" value="mRNA"/>
</dbReference>
<dbReference type="EMBL" id="AF146435">
    <property type="protein sequence ID" value="AAF25597.1"/>
    <property type="molecule type" value="mRNA"/>
</dbReference>
<dbReference type="EMBL" id="AF146436">
    <property type="protein sequence ID" value="AAF25598.1"/>
    <property type="molecule type" value="mRNA"/>
</dbReference>
<dbReference type="EMBL" id="AF146437">
    <property type="protein sequence ID" value="AAF25599.1"/>
    <property type="molecule type" value="mRNA"/>
</dbReference>
<dbReference type="EMBL" id="AF146438">
    <property type="protein sequence ID" value="AAF25600.1"/>
    <property type="molecule type" value="mRNA"/>
</dbReference>
<dbReference type="EMBL" id="AF146439">
    <property type="protein sequence ID" value="AAF25601.1"/>
    <property type="molecule type" value="mRNA"/>
</dbReference>
<dbReference type="EMBL" id="AL590640">
    <property type="status" value="NOT_ANNOTATED_CDS"/>
    <property type="molecule type" value="Genomic_DNA"/>
</dbReference>
<dbReference type="EMBL" id="AL137860">
    <property type="status" value="NOT_ANNOTATED_CDS"/>
    <property type="molecule type" value="Genomic_DNA"/>
</dbReference>
<dbReference type="EMBL" id="CH471059">
    <property type="protein sequence ID" value="EAX07773.1"/>
    <property type="molecule type" value="Genomic_DNA"/>
</dbReference>
<dbReference type="EMBL" id="CH471059">
    <property type="protein sequence ID" value="EAX07774.1"/>
    <property type="molecule type" value="Genomic_DNA"/>
</dbReference>
<dbReference type="EMBL" id="BC012121">
    <property type="protein sequence ID" value="AAH12121.1"/>
    <property type="molecule type" value="mRNA"/>
</dbReference>
<dbReference type="CCDS" id="CCDS295.1">
    <molecule id="P19634-1"/>
</dbReference>
<dbReference type="PIR" id="I57487">
    <property type="entry name" value="I57487"/>
</dbReference>
<dbReference type="RefSeq" id="NP_003038.2">
    <molecule id="P19634-1"/>
    <property type="nucleotide sequence ID" value="NM_003047.4"/>
</dbReference>
<dbReference type="PDB" id="1Y4E">
    <property type="method" value="NMR"/>
    <property type="chains" value="A=155-180"/>
</dbReference>
<dbReference type="PDB" id="2BEC">
    <property type="method" value="X-ray"/>
    <property type="resolution" value="2.70 A"/>
    <property type="chains" value="B=503-545"/>
</dbReference>
<dbReference type="PDB" id="2E30">
    <property type="method" value="NMR"/>
    <property type="chains" value="B=503-545"/>
</dbReference>
<dbReference type="PDB" id="2HTG">
    <property type="method" value="NMR"/>
    <property type="chains" value="A=250-274"/>
</dbReference>
<dbReference type="PDB" id="2KBV">
    <property type="method" value="NMR"/>
    <property type="chains" value="A=447-472"/>
</dbReference>
<dbReference type="PDB" id="2L0E">
    <property type="method" value="NMR"/>
    <property type="chains" value="A=226-250"/>
</dbReference>
<dbReference type="PDB" id="2MDF">
    <property type="method" value="NMR"/>
    <property type="chains" value="A=226-274"/>
</dbReference>
<dbReference type="PDB" id="2YGG">
    <property type="method" value="X-ray"/>
    <property type="resolution" value="2.23 A"/>
    <property type="chains" value="A=622-689"/>
</dbReference>
<dbReference type="PDB" id="6BJF">
    <property type="method" value="NMR"/>
    <property type="chains" value="A=431-443"/>
</dbReference>
<dbReference type="PDB" id="6NUC">
    <property type="method" value="X-ray"/>
    <property type="resolution" value="1.90 A"/>
    <property type="chains" value="C=679-723"/>
</dbReference>
<dbReference type="PDB" id="6NUF">
    <property type="method" value="X-ray"/>
    <property type="resolution" value="1.90 A"/>
    <property type="chains" value="C=679-723"/>
</dbReference>
<dbReference type="PDB" id="6NUU">
    <property type="method" value="X-ray"/>
    <property type="resolution" value="2.30 A"/>
    <property type="chains" value="C=679-723"/>
</dbReference>
<dbReference type="PDB" id="6ZBI">
    <property type="method" value="NMR"/>
    <property type="chains" value="B/C=622-657"/>
</dbReference>
<dbReference type="PDB" id="7DSV">
    <property type="method" value="EM"/>
    <property type="resolution" value="3.40 A"/>
    <property type="chains" value="A/B=87-558"/>
</dbReference>
<dbReference type="PDB" id="7DSW">
    <property type="method" value="EM"/>
    <property type="resolution" value="3.30 A"/>
    <property type="chains" value="A/B=87-506"/>
</dbReference>
<dbReference type="PDB" id="7DSX">
    <property type="method" value="EM"/>
    <property type="resolution" value="3.50 A"/>
    <property type="chains" value="A/B=85-593"/>
</dbReference>
<dbReference type="PDBsum" id="1Y4E"/>
<dbReference type="PDBsum" id="2BEC"/>
<dbReference type="PDBsum" id="2E30"/>
<dbReference type="PDBsum" id="2HTG"/>
<dbReference type="PDBsum" id="2KBV"/>
<dbReference type="PDBsum" id="2L0E"/>
<dbReference type="PDBsum" id="2MDF"/>
<dbReference type="PDBsum" id="2YGG"/>
<dbReference type="PDBsum" id="6BJF"/>
<dbReference type="PDBsum" id="6NUC"/>
<dbReference type="PDBsum" id="6NUF"/>
<dbReference type="PDBsum" id="6NUU"/>
<dbReference type="PDBsum" id="6ZBI"/>
<dbReference type="PDBsum" id="7DSV"/>
<dbReference type="PDBsum" id="7DSW"/>
<dbReference type="PDBsum" id="7DSX"/>
<dbReference type="BMRB" id="P19634"/>
<dbReference type="EMDB" id="EMD-30847"/>
<dbReference type="EMDB" id="EMD-30848"/>
<dbReference type="EMDB" id="EMD-30849"/>
<dbReference type="SMR" id="P19634"/>
<dbReference type="BioGRID" id="112438">
    <property type="interactions" value="127"/>
</dbReference>
<dbReference type="FunCoup" id="P19634">
    <property type="interactions" value="1135"/>
</dbReference>
<dbReference type="IntAct" id="P19634">
    <property type="interactions" value="60"/>
</dbReference>
<dbReference type="MINT" id="P19634"/>
<dbReference type="STRING" id="9606.ENSP00000263980"/>
<dbReference type="BindingDB" id="P19634"/>
<dbReference type="ChEMBL" id="CHEMBL2781"/>
<dbReference type="DrugBank" id="DB00594">
    <property type="generic name" value="Amiloride"/>
</dbReference>
<dbReference type="DrugBank" id="DB06468">
    <property type="generic name" value="Cariporide"/>
</dbReference>
<dbReference type="DrugBank" id="DB02624">
    <property type="generic name" value="Homoserine Lactone"/>
</dbReference>
<dbReference type="DrugBank" id="DB01043">
    <property type="generic name" value="Memantine"/>
</dbReference>
<dbReference type="DrugCentral" id="P19634"/>
<dbReference type="TCDB" id="2.A.36.1.13">
    <property type="family name" value="the monovalent cation:proton antiporter-1 (cpa1) family"/>
</dbReference>
<dbReference type="GlyCosmos" id="P19634">
    <property type="glycosylation" value="6 sites, No reported glycans"/>
</dbReference>
<dbReference type="GlyGen" id="P19634">
    <property type="glycosylation" value="10 sites, 1 N-linked glycan (1 site), 1 O-linked glycan (1 site)"/>
</dbReference>
<dbReference type="iPTMnet" id="P19634"/>
<dbReference type="PhosphoSitePlus" id="P19634"/>
<dbReference type="SwissPalm" id="P19634"/>
<dbReference type="BioMuta" id="SLC9A1"/>
<dbReference type="DMDM" id="127809"/>
<dbReference type="CPTAC" id="CPTAC-1005"/>
<dbReference type="jPOST" id="P19634"/>
<dbReference type="MassIVE" id="P19634"/>
<dbReference type="PaxDb" id="9606-ENSP00000263980"/>
<dbReference type="PeptideAtlas" id="P19634"/>
<dbReference type="ProteomicsDB" id="53683">
    <molecule id="P19634-1"/>
</dbReference>
<dbReference type="ProteomicsDB" id="53684">
    <molecule id="P19634-2"/>
</dbReference>
<dbReference type="Antibodypedia" id="30723">
    <property type="antibodies" value="278 antibodies from 37 providers"/>
</dbReference>
<dbReference type="DNASU" id="6548"/>
<dbReference type="Ensembl" id="ENST00000263980.8">
    <molecule id="P19634-1"/>
    <property type="protein sequence ID" value="ENSP00000263980.3"/>
    <property type="gene ID" value="ENSG00000090020.11"/>
</dbReference>
<dbReference type="Ensembl" id="ENST00000374086.3">
    <molecule id="P19634-2"/>
    <property type="protein sequence ID" value="ENSP00000363199.3"/>
    <property type="gene ID" value="ENSG00000090020.11"/>
</dbReference>
<dbReference type="GeneID" id="6548"/>
<dbReference type="KEGG" id="hsa:6548"/>
<dbReference type="MANE-Select" id="ENST00000263980.8">
    <property type="protein sequence ID" value="ENSP00000263980.3"/>
    <property type="RefSeq nucleotide sequence ID" value="NM_003047.5"/>
    <property type="RefSeq protein sequence ID" value="NP_003038.2"/>
</dbReference>
<dbReference type="UCSC" id="uc001bnm.5">
    <molecule id="P19634-1"/>
    <property type="organism name" value="human"/>
</dbReference>
<dbReference type="AGR" id="HGNC:11071"/>
<dbReference type="CTD" id="6548"/>
<dbReference type="DisGeNET" id="6548"/>
<dbReference type="GeneCards" id="SLC9A1"/>
<dbReference type="HGNC" id="HGNC:11071">
    <property type="gene designation" value="SLC9A1"/>
</dbReference>
<dbReference type="HPA" id="ENSG00000090020">
    <property type="expression patterns" value="Tissue enhanced (salivary gland, stomach)"/>
</dbReference>
<dbReference type="MalaCards" id="SLC9A1"/>
<dbReference type="MIM" id="107310">
    <property type="type" value="gene"/>
</dbReference>
<dbReference type="MIM" id="616291">
    <property type="type" value="phenotype"/>
</dbReference>
<dbReference type="neXtProt" id="NX_P19634"/>
<dbReference type="OpenTargets" id="ENSG00000090020"/>
<dbReference type="Orphanet" id="448251">
    <property type="disease" value="Progressive autosomal recessive ataxia-deafness syndrome"/>
</dbReference>
<dbReference type="PharmGKB" id="PA35928"/>
<dbReference type="VEuPathDB" id="HostDB:ENSG00000090020"/>
<dbReference type="eggNOG" id="KOG1966">
    <property type="taxonomic scope" value="Eukaryota"/>
</dbReference>
<dbReference type="GeneTree" id="ENSGT00940000156338"/>
<dbReference type="HOGENOM" id="CLU_005912_4_1_1"/>
<dbReference type="InParanoid" id="P19634"/>
<dbReference type="OMA" id="ATPPFWA"/>
<dbReference type="OrthoDB" id="196264at2759"/>
<dbReference type="PAN-GO" id="P19634">
    <property type="GO annotations" value="6 GO annotations based on evolutionary models"/>
</dbReference>
<dbReference type="PhylomeDB" id="P19634"/>
<dbReference type="TreeFam" id="TF317212"/>
<dbReference type="PathwayCommons" id="P19634"/>
<dbReference type="Reactome" id="R-HSA-2160916">
    <property type="pathway name" value="Hyaluronan uptake and degradation"/>
</dbReference>
<dbReference type="Reactome" id="R-HSA-425986">
    <property type="pathway name" value="Sodium/Proton exchangers"/>
</dbReference>
<dbReference type="SignaLink" id="P19634"/>
<dbReference type="SIGNOR" id="P19634"/>
<dbReference type="BioGRID-ORCS" id="6548">
    <property type="hits" value="15 hits in 1169 CRISPR screens"/>
</dbReference>
<dbReference type="ChiTaRS" id="SLC9A1">
    <property type="organism name" value="human"/>
</dbReference>
<dbReference type="EvolutionaryTrace" id="P19634"/>
<dbReference type="GeneWiki" id="Sodium%E2%80%93hydrogen_antiporter_1"/>
<dbReference type="GenomeRNAi" id="6548"/>
<dbReference type="Pharos" id="P19634">
    <property type="development level" value="Tchem"/>
</dbReference>
<dbReference type="PRO" id="PR:P19634"/>
<dbReference type="Proteomes" id="UP000005640">
    <property type="component" value="Chromosome 1"/>
</dbReference>
<dbReference type="RNAct" id="P19634">
    <property type="molecule type" value="protein"/>
</dbReference>
<dbReference type="Bgee" id="ENSG00000090020">
    <property type="expression patterns" value="Expressed in parotid gland and 190 other cell types or tissues"/>
</dbReference>
<dbReference type="ExpressionAtlas" id="P19634">
    <property type="expression patterns" value="baseline and differential"/>
</dbReference>
<dbReference type="GO" id="GO:0016324">
    <property type="term" value="C:apical plasma membrane"/>
    <property type="evidence" value="ECO:0007669"/>
    <property type="project" value="Ensembl"/>
</dbReference>
<dbReference type="GO" id="GO:0016323">
    <property type="term" value="C:basolateral plasma membrane"/>
    <property type="evidence" value="ECO:0000250"/>
    <property type="project" value="UniProtKB"/>
</dbReference>
<dbReference type="GO" id="GO:0090533">
    <property type="term" value="C:cation-transporting ATPase complex"/>
    <property type="evidence" value="ECO:0000314"/>
    <property type="project" value="BHF-UCL"/>
</dbReference>
<dbReference type="GO" id="GO:0009986">
    <property type="term" value="C:cell surface"/>
    <property type="evidence" value="ECO:0007669"/>
    <property type="project" value="Ensembl"/>
</dbReference>
<dbReference type="GO" id="GO:0005737">
    <property type="term" value="C:cytoplasm"/>
    <property type="evidence" value="ECO:0000314"/>
    <property type="project" value="UniProtKB"/>
</dbReference>
<dbReference type="GO" id="GO:0070062">
    <property type="term" value="C:extracellular exosome"/>
    <property type="evidence" value="ECO:0007005"/>
    <property type="project" value="UniProtKB"/>
</dbReference>
<dbReference type="GO" id="GO:0005925">
    <property type="term" value="C:focal adhesion"/>
    <property type="evidence" value="ECO:0007005"/>
    <property type="project" value="UniProtKB"/>
</dbReference>
<dbReference type="GO" id="GO:0014704">
    <property type="term" value="C:intercalated disc"/>
    <property type="evidence" value="ECO:0007669"/>
    <property type="project" value="Ensembl"/>
</dbReference>
<dbReference type="GO" id="GO:0030027">
    <property type="term" value="C:lamellipodium"/>
    <property type="evidence" value="ECO:0000304"/>
    <property type="project" value="BHF-UCL"/>
</dbReference>
<dbReference type="GO" id="GO:0016020">
    <property type="term" value="C:membrane"/>
    <property type="evidence" value="ECO:0000304"/>
    <property type="project" value="UniProtKB"/>
</dbReference>
<dbReference type="GO" id="GO:0045121">
    <property type="term" value="C:membrane raft"/>
    <property type="evidence" value="ECO:0000314"/>
    <property type="project" value="BHF-UCL"/>
</dbReference>
<dbReference type="GO" id="GO:0005739">
    <property type="term" value="C:mitochondrion"/>
    <property type="evidence" value="ECO:0007669"/>
    <property type="project" value="GOC"/>
</dbReference>
<dbReference type="GO" id="GO:0005654">
    <property type="term" value="C:nucleoplasm"/>
    <property type="evidence" value="ECO:0000314"/>
    <property type="project" value="HPA"/>
</dbReference>
<dbReference type="GO" id="GO:0048471">
    <property type="term" value="C:perinuclear region of cytoplasm"/>
    <property type="evidence" value="ECO:0007669"/>
    <property type="project" value="Ensembl"/>
</dbReference>
<dbReference type="GO" id="GO:0005886">
    <property type="term" value="C:plasma membrane"/>
    <property type="evidence" value="ECO:0000314"/>
    <property type="project" value="HPA"/>
</dbReference>
<dbReference type="GO" id="GO:0030315">
    <property type="term" value="C:T-tubule"/>
    <property type="evidence" value="ECO:0007669"/>
    <property type="project" value="Ensembl"/>
</dbReference>
<dbReference type="GO" id="GO:0048306">
    <property type="term" value="F:calcium-dependent protein binding"/>
    <property type="evidence" value="ECO:0000314"/>
    <property type="project" value="UniProtKB"/>
</dbReference>
<dbReference type="GO" id="GO:0005516">
    <property type="term" value="F:calmodulin binding"/>
    <property type="evidence" value="ECO:0007669"/>
    <property type="project" value="UniProtKB-KW"/>
</dbReference>
<dbReference type="GO" id="GO:0042802">
    <property type="term" value="F:identical protein binding"/>
    <property type="evidence" value="ECO:0000314"/>
    <property type="project" value="UniProtKB"/>
</dbReference>
<dbReference type="GO" id="GO:0060090">
    <property type="term" value="F:molecular adaptor activity"/>
    <property type="evidence" value="ECO:0000304"/>
    <property type="project" value="BHF-UCL"/>
</dbReference>
<dbReference type="GO" id="GO:0005546">
    <property type="term" value="F:phosphatidylinositol-4,5-bisphosphate binding"/>
    <property type="evidence" value="ECO:0000304"/>
    <property type="project" value="BHF-UCL"/>
</dbReference>
<dbReference type="GO" id="GO:0005543">
    <property type="term" value="F:phospholipid binding"/>
    <property type="evidence" value="ECO:0000314"/>
    <property type="project" value="UniProtKB"/>
</dbReference>
<dbReference type="GO" id="GO:0015386">
    <property type="term" value="F:potassium:proton antiporter activity"/>
    <property type="evidence" value="ECO:0000318"/>
    <property type="project" value="GO_Central"/>
</dbReference>
<dbReference type="GO" id="GO:0030346">
    <property type="term" value="F:protein phosphatase 2B binding"/>
    <property type="evidence" value="ECO:0000314"/>
    <property type="project" value="BHF-UCL"/>
</dbReference>
<dbReference type="GO" id="GO:0030674">
    <property type="term" value="F:protein-macromolecule adaptor activity"/>
    <property type="evidence" value="ECO:0000304"/>
    <property type="project" value="BHF-UCL"/>
</dbReference>
<dbReference type="GO" id="GO:0015385">
    <property type="term" value="F:sodium:proton antiporter activity"/>
    <property type="evidence" value="ECO:0000314"/>
    <property type="project" value="UniProtKB"/>
</dbReference>
<dbReference type="GO" id="GO:0086003">
    <property type="term" value="P:cardiac muscle cell contraction"/>
    <property type="evidence" value="ECO:0007669"/>
    <property type="project" value="Ensembl"/>
</dbReference>
<dbReference type="GO" id="GO:0055007">
    <property type="term" value="P:cardiac muscle cell differentiation"/>
    <property type="evidence" value="ECO:0007669"/>
    <property type="project" value="Ensembl"/>
</dbReference>
<dbReference type="GO" id="GO:0016477">
    <property type="term" value="P:cell migration"/>
    <property type="evidence" value="ECO:0000304"/>
    <property type="project" value="BHF-UCL"/>
</dbReference>
<dbReference type="GO" id="GO:0071468">
    <property type="term" value="P:cellular response to acidic pH"/>
    <property type="evidence" value="ECO:0000314"/>
    <property type="project" value="BHF-UCL"/>
</dbReference>
<dbReference type="GO" id="GO:0071236">
    <property type="term" value="P:cellular response to antibiotic"/>
    <property type="evidence" value="ECO:0007669"/>
    <property type="project" value="Ensembl"/>
</dbReference>
<dbReference type="GO" id="GO:0070417">
    <property type="term" value="P:cellular response to cold"/>
    <property type="evidence" value="ECO:0007669"/>
    <property type="project" value="Ensembl"/>
</dbReference>
<dbReference type="GO" id="GO:0071257">
    <property type="term" value="P:cellular response to electrical stimulus"/>
    <property type="evidence" value="ECO:0007669"/>
    <property type="project" value="Ensembl"/>
</dbReference>
<dbReference type="GO" id="GO:0071872">
    <property type="term" value="P:cellular response to epinephrine stimulus"/>
    <property type="evidence" value="ECO:0000315"/>
    <property type="project" value="BHF-UCL"/>
</dbReference>
<dbReference type="GO" id="GO:0071456">
    <property type="term" value="P:cellular response to hypoxia"/>
    <property type="evidence" value="ECO:0007669"/>
    <property type="project" value="Ensembl"/>
</dbReference>
<dbReference type="GO" id="GO:0032869">
    <property type="term" value="P:cellular response to insulin stimulus"/>
    <property type="evidence" value="ECO:0007669"/>
    <property type="project" value="Ensembl"/>
</dbReference>
<dbReference type="GO" id="GO:0071260">
    <property type="term" value="P:cellular response to mechanical stimulus"/>
    <property type="evidence" value="ECO:0000304"/>
    <property type="project" value="BHF-UCL"/>
</dbReference>
<dbReference type="GO" id="GO:0006883">
    <property type="term" value="P:intracellular sodium ion homeostasis"/>
    <property type="evidence" value="ECO:0000314"/>
    <property type="project" value="BHF-UCL"/>
</dbReference>
<dbReference type="GO" id="GO:0030011">
    <property type="term" value="P:maintenance of cell polarity"/>
    <property type="evidence" value="ECO:0000304"/>
    <property type="project" value="BHF-UCL"/>
</dbReference>
<dbReference type="GO" id="GO:0006811">
    <property type="term" value="P:monoatomic ion transport"/>
    <property type="evidence" value="ECO:0000304"/>
    <property type="project" value="Reactome"/>
</dbReference>
<dbReference type="GO" id="GO:0043066">
    <property type="term" value="P:negative regulation of apoptotic process"/>
    <property type="evidence" value="ECO:0007669"/>
    <property type="project" value="Ensembl"/>
</dbReference>
<dbReference type="GO" id="GO:0045760">
    <property type="term" value="P:positive regulation of action potential"/>
    <property type="evidence" value="ECO:0007669"/>
    <property type="project" value="Ensembl"/>
</dbReference>
<dbReference type="GO" id="GO:0043065">
    <property type="term" value="P:positive regulation of apoptotic process"/>
    <property type="evidence" value="ECO:0007669"/>
    <property type="project" value="Ensembl"/>
</dbReference>
<dbReference type="GO" id="GO:0070886">
    <property type="term" value="P:positive regulation of calcineurin-NFAT signaling cascade"/>
    <property type="evidence" value="ECO:0000314"/>
    <property type="project" value="BHF-UCL"/>
</dbReference>
<dbReference type="GO" id="GO:0010613">
    <property type="term" value="P:positive regulation of cardiac muscle hypertrophy"/>
    <property type="evidence" value="ECO:0000315"/>
    <property type="project" value="BHF-UCL"/>
</dbReference>
<dbReference type="GO" id="GO:0030307">
    <property type="term" value="P:positive regulation of cell growth"/>
    <property type="evidence" value="ECO:0007669"/>
    <property type="project" value="Ensembl"/>
</dbReference>
<dbReference type="GO" id="GO:0035794">
    <property type="term" value="P:positive regulation of mitochondrial membrane permeability"/>
    <property type="evidence" value="ECO:0007669"/>
    <property type="project" value="Ensembl"/>
</dbReference>
<dbReference type="GO" id="GO:0098735">
    <property type="term" value="P:positive regulation of the force of heart contraction"/>
    <property type="evidence" value="ECO:0000315"/>
    <property type="project" value="BHF-UCL"/>
</dbReference>
<dbReference type="GO" id="GO:0045944">
    <property type="term" value="P:positive regulation of transcription by RNA polymerase II"/>
    <property type="evidence" value="ECO:0000314"/>
    <property type="project" value="BHF-UCL"/>
</dbReference>
<dbReference type="GO" id="GO:0071805">
    <property type="term" value="P:potassium ion transmembrane transport"/>
    <property type="evidence" value="ECO:0000318"/>
    <property type="project" value="GO_Central"/>
</dbReference>
<dbReference type="GO" id="GO:0051259">
    <property type="term" value="P:protein complex oligomerization"/>
    <property type="evidence" value="ECO:0000250"/>
    <property type="project" value="UniProtKB"/>
</dbReference>
<dbReference type="GO" id="GO:1902600">
    <property type="term" value="P:proton transmembrane transport"/>
    <property type="evidence" value="ECO:0000314"/>
    <property type="project" value="BHF-UCL"/>
</dbReference>
<dbReference type="GO" id="GO:0086036">
    <property type="term" value="P:regulation of cardiac muscle cell membrane potential"/>
    <property type="evidence" value="ECO:0000304"/>
    <property type="project" value="BHF-UCL"/>
</dbReference>
<dbReference type="GO" id="GO:0010882">
    <property type="term" value="P:regulation of cardiac muscle contraction by calcium ion signaling"/>
    <property type="evidence" value="ECO:0000315"/>
    <property type="project" value="BHF-UCL"/>
</dbReference>
<dbReference type="GO" id="GO:0051893">
    <property type="term" value="P:regulation of focal adhesion assembly"/>
    <property type="evidence" value="ECO:0000304"/>
    <property type="project" value="BHF-UCL"/>
</dbReference>
<dbReference type="GO" id="GO:0051453">
    <property type="term" value="P:regulation of intracellular pH"/>
    <property type="evidence" value="ECO:0000314"/>
    <property type="project" value="UniProtKB"/>
</dbReference>
<dbReference type="GO" id="GO:0006885">
    <property type="term" value="P:regulation of pH"/>
    <property type="evidence" value="ECO:0000314"/>
    <property type="project" value="UniProtKB"/>
</dbReference>
<dbReference type="GO" id="GO:0051492">
    <property type="term" value="P:regulation of stress fiber assembly"/>
    <property type="evidence" value="ECO:0000304"/>
    <property type="project" value="BHF-UCL"/>
</dbReference>
<dbReference type="GO" id="GO:0086092">
    <property type="term" value="P:regulation of the force of heart contraction by cardiac conduction"/>
    <property type="evidence" value="ECO:0000315"/>
    <property type="project" value="BHF-UCL"/>
</dbReference>
<dbReference type="GO" id="GO:0010447">
    <property type="term" value="P:response to acidic pH"/>
    <property type="evidence" value="ECO:0000314"/>
    <property type="project" value="UniProtKB"/>
</dbReference>
<dbReference type="GO" id="GO:0035994">
    <property type="term" value="P:response to muscle stretch"/>
    <property type="evidence" value="ECO:0000315"/>
    <property type="project" value="BHF-UCL"/>
</dbReference>
<dbReference type="GO" id="GO:0036376">
    <property type="term" value="P:sodium ion export across plasma membrane"/>
    <property type="evidence" value="ECO:0000250"/>
    <property type="project" value="UniProtKB"/>
</dbReference>
<dbReference type="GO" id="GO:0098719">
    <property type="term" value="P:sodium ion import across plasma membrane"/>
    <property type="evidence" value="ECO:0000314"/>
    <property type="project" value="UniProtKB"/>
</dbReference>
<dbReference type="GO" id="GO:0048863">
    <property type="term" value="P:stem cell differentiation"/>
    <property type="evidence" value="ECO:0007669"/>
    <property type="project" value="Ensembl"/>
</dbReference>
<dbReference type="DisProt" id="DP01241"/>
<dbReference type="Gene3D" id="6.10.140.1330">
    <property type="match status" value="1"/>
</dbReference>
<dbReference type="Gene3D" id="6.10.250.1040">
    <property type="match status" value="1"/>
</dbReference>
<dbReference type="Gene3D" id="6.10.250.2020">
    <property type="match status" value="1"/>
</dbReference>
<dbReference type="InterPro" id="IPR018422">
    <property type="entry name" value="Cation/H_exchanger_CPA1"/>
</dbReference>
<dbReference type="InterPro" id="IPR006153">
    <property type="entry name" value="Cation/H_exchanger_TM"/>
</dbReference>
<dbReference type="InterPro" id="IPR004709">
    <property type="entry name" value="NaH_exchanger"/>
</dbReference>
<dbReference type="InterPro" id="IPR001970">
    <property type="entry name" value="NHE-1-like"/>
</dbReference>
<dbReference type="InterPro" id="IPR032103">
    <property type="entry name" value="NHE_CaM-bd"/>
</dbReference>
<dbReference type="NCBIfam" id="TIGR00840">
    <property type="entry name" value="b_cpa1"/>
    <property type="match status" value="1"/>
</dbReference>
<dbReference type="PANTHER" id="PTHR10110">
    <property type="entry name" value="SODIUM/HYDROGEN EXCHANGER"/>
    <property type="match status" value="1"/>
</dbReference>
<dbReference type="PANTHER" id="PTHR10110:SF59">
    <property type="entry name" value="SODIUM_HYDROGEN EXCHANGER 1"/>
    <property type="match status" value="1"/>
</dbReference>
<dbReference type="Pfam" id="PF00999">
    <property type="entry name" value="Na_H_Exchanger"/>
    <property type="match status" value="1"/>
</dbReference>
<dbReference type="Pfam" id="PF16644">
    <property type="entry name" value="NEXCaM_BD"/>
    <property type="match status" value="1"/>
</dbReference>
<dbReference type="PRINTS" id="PR01084">
    <property type="entry name" value="NAHEXCHNGR"/>
</dbReference>
<dbReference type="PRINTS" id="PR01085">
    <property type="entry name" value="NAHEXCHNGR1"/>
</dbReference>
<comment type="function">
    <text evidence="1 7 9 13 14 15 16 18 21 22 26 28 32 34 35 37">Electroneutral Na(+) /H(+) antiporter that extrudes Na(+) in exchange for external protons driven by the inward sodium ion chemical gradient, protecting cells from acidification that occurs from metabolism (PubMed:11350981, PubMed:11532004, PubMed:14680478, PubMed:15035633, PubMed:15677483, PubMed:17073455, PubMed:17493937, PubMed:22020933, PubMed:27650500, PubMed:32130622, PubMed:7110335, PubMed:7603840). Exchanges intracellular H(+) ions for extracellular Na(+) in 1:1 stoichiometry (By similarity). Plays a key role in maintening intracellular pH neutral and cell volume, and thus is important for cell growth, proliferation, migration and survival (PubMed:12947095, PubMed:15096511, PubMed:22020933, PubMed:8901634). In addition, can transport lithium Li(+) and also functions as a Na(+)/Li(+) antiporter (PubMed:7603840). SLC9A1 also functions in membrane anchoring and organization of scaffolding complexes that coordinate signaling inputs (PubMed:15096511).</text>
</comment>
<comment type="catalytic activity">
    <reaction evidence="7 8 9 14 15 18 21 26 28 32 34 35">
        <text>Na(+)(in) + H(+)(out) = Na(+)(out) + H(+)(in)</text>
        <dbReference type="Rhea" id="RHEA:29419"/>
        <dbReference type="ChEBI" id="CHEBI:15378"/>
        <dbReference type="ChEBI" id="CHEBI:29101"/>
    </reaction>
</comment>
<comment type="catalytic activity">
    <reaction evidence="35">
        <text>Li(+)(out) + H(+)(in) = Li(+)(in) + H(+)(out)</text>
        <dbReference type="Rhea" id="RHEA:72407"/>
        <dbReference type="ChEBI" id="CHEBI:15378"/>
        <dbReference type="ChEBI" id="CHEBI:49713"/>
    </reaction>
</comment>
<comment type="catalytic activity">
    <reaction evidence="35">
        <text>Li(+)(in) + Na(+)(out) = Li(+)(out) + Na(+)(in)</text>
        <dbReference type="Rhea" id="RHEA:72415"/>
        <dbReference type="ChEBI" id="CHEBI:29101"/>
        <dbReference type="ChEBI" id="CHEBI:49713"/>
    </reaction>
</comment>
<comment type="activity regulation">
    <text evidence="8 22 26 44">Activated at acidic pHs (Probable). Inhibited by amiloride and 5-amino-substituted derivatives (PubMed:17493937). Inhibited by cariporide and eniporide (PubMed:11412833). Phosphatidylinositol 4,5-bisphosphate (PI(4,5)P2) and phosphatidylinositol 3,4,5-trisphosphate (PI(3,4,5)P3) bind and differentially regulate SLC9A1 activity (PubMed:22020933).</text>
</comment>
<comment type="biophysicochemical properties">
    <kinetics>
        <KM evidence="9">41.5 mM for Na(+)</KM>
        <KM evidence="32">73 mM for Na(+)</KM>
        <KM evidence="9">9.8 mM for Li(+)</KM>
        <KM evidence="32">23.3 mM for Li(+)</KM>
    </kinetics>
    <phDependence>
        <text evidence="44">Fully active at acidic pHs, the antiporter is virtually turned off at neutral pH.</text>
    </phDependence>
</comment>
<comment type="subunit">
    <text evidence="1 7 10 11 12 15 17 19 20 21 25 30 33 37 38">Homodimer; dimerization is crucial for its function (PubMed:15323573, PubMed:17073455, PubMed:34108458). Oligomer (By similarity). Interacts with CALM1 in a calcium-dependent manner (PubMed:12809501, PubMed:18757828, PubMed:30287853). Interacts with TESC (PubMed:11696366, PubMed:12809501, PubMed:30287853). Interacts (via the C-terminal domain) with CHP1; the interaction occurs at the plasma membrane in a calcium-dependent manner and facilitates the maturation, cell surface expression, and function of SLC9A3 (PubMed:11350981, PubMed:15035633, PubMed:17050540, PubMed:34108458, PubMed:8901634, PubMed:8967452). Interacts with CHP2; the interaction occurs in a calcium-dependent manner (PubMed:12226101, PubMed:16710297, PubMed:21392185). Interacts with EZR; regulates the cytoskeletal interactions of SLC9A1 and promotes stress fiber formation (By similarity).</text>
</comment>
<comment type="interaction">
    <interactant intactId="EBI-743635">
        <id>P19634</id>
    </interactant>
    <interactant intactId="EBI-722721">
        <id>Q99653</id>
        <label>CHP1</label>
    </interactant>
    <organismsDiffer>false</organismsDiffer>
    <experiments>3</experiments>
</comment>
<comment type="interaction">
    <interactant intactId="EBI-743635">
        <id>P19634</id>
    </interactant>
    <interactant intactId="EBI-8525536">
        <id>O43745</id>
        <label>CHP2</label>
    </interactant>
    <organismsDiffer>false</organismsDiffer>
    <experiments>5</experiments>
</comment>
<comment type="interaction">
    <interactant intactId="EBI-743635">
        <id>P19634</id>
    </interactant>
    <interactant intactId="EBI-740653">
        <id>Q96BS2</id>
        <label>TESC</label>
    </interactant>
    <organismsDiffer>false</organismsDiffer>
    <experiments>4</experiments>
</comment>
<comment type="subcellular location">
    <subcellularLocation>
        <location evidence="14 15 18 21 32 33">Cell membrane</location>
        <topology evidence="33">Multi-pass membrane protein</topology>
    </subcellularLocation>
    <subcellularLocation>
        <location evidence="2">Basolateral cell membrane</location>
        <topology evidence="33">Multi-pass membrane protein</topology>
    </subcellularLocation>
    <text evidence="24">Localized basolaterally in every epithelial cell, except in the choroid plexus where SLC9A1 is expressed luminally.</text>
</comment>
<comment type="alternative products">
    <event type="alternative splicing"/>
    <isoform>
        <id>P19634-1</id>
        <name>1</name>
        <sequence type="displayed"/>
    </isoform>
    <isoform>
        <id>P19634-2</id>
        <name>2</name>
        <sequence type="described" ref="VSP_022101 VSP_022102"/>
    </isoform>
</comment>
<comment type="tissue specificity">
    <text>Kidney and intestine.</text>
</comment>
<comment type="domain">
    <text evidence="7 15 31 37 38">The C-terminal intracellular domain is subject to extensive post-translational modifications and binding partner interactions which regulate transporter activity, scaffolding functions, downstream events and localization.</text>
</comment>
<comment type="PTM">
    <text evidence="36">O-glycosylated.</text>
</comment>
<comment type="PTM">
    <text evidence="1">Ubiquitinated, leading to its degradation by the proteasome. Ubiquitination is reduced by CHP1.</text>
</comment>
<comment type="PTM">
    <text evidence="23 31">Phosphorylation at Thr-779 increases SLC9A1 activity. Specifically dephosphorylated at Thr-779 by PPP3CA that negatively regulates SLC9A1 activity (PubMed:31375679). Phosphorylation at Ser-648 by AKT1 reduces SLC9A1 binding to CALM1 (PubMed:18757828).</text>
</comment>
<comment type="PTM">
    <text evidence="1">Palmitoylated; may play a major role in SLC9A1 regulation.</text>
</comment>
<comment type="disease" evidence="27 29">
    <disease id="DI-04382">
        <name>Lichtenstein-Knorr syndrome</name>
        <acronym>LIKNS</acronym>
        <description>An autosomal recessive neurologic disorder characterized by progressive cerebellar ataxia and severe progressive sensorineural hearing loss.</description>
        <dbReference type="MIM" id="616291"/>
    </disease>
    <text>The disease is caused by variants affecting the gene represented in this entry.</text>
</comment>
<comment type="miscellaneous">
    <text evidence="6 33 39">Predicted models used for more than 20 years predicted 10-12 transmembrane segments (PubMed:10713111, PubMed:9688597). More recently, the structure of SLC9A1 has been solved and reveals that SLC9A1 possesses 13 transmembrane regions (PubMed:34108458).</text>
</comment>
<comment type="similarity">
    <text evidence="43">Belongs to the monovalent cation:proton antiporter 1 (CPA1) transporter (TC 2.A.36) family.</text>
</comment>
<comment type="caution">
    <text evidence="43">Although PubMed:12809501 report that TESC-binding results in a decrease in activity, studies with rat SLC9A1 show that TESC-binding results in the maturation and accumulation of SLC9A1 at the cell surface.</text>
</comment>
<comment type="caution">
    <text evidence="10 12 30">The interacting region with TESC is conflicting: Interaction with TESC has been reported via the juxtamembrane region of the cytoplasmic C-terminal domain, including residues 503-545 (PubMed:11696366, PubMed:30287853). In contrast, another publication has reported interaction with TESC via residues 633-815, the region of the cytoplasmic C-terminus more distal to the membrane (PubMed:12809501).</text>
</comment>
<name>SL9A1_HUMAN</name>
<gene>
    <name evidence="45" type="primary">SLC9A1</name>
    <name type="synonym">APNH1</name>
    <name evidence="42" type="synonym">NHE1</name>
</gene>
<protein>
    <recommendedName>
        <fullName>Sodium/hydrogen exchanger 1</fullName>
    </recommendedName>
    <alternativeName>
        <fullName>APNH</fullName>
    </alternativeName>
    <alternativeName>
        <fullName>Na(+)/H(+) antiporter, amiloride-sensitive</fullName>
    </alternativeName>
    <alternativeName>
        <fullName>Na(+)/H(+) exchanger 1</fullName>
        <shortName evidence="41">NHE-1</shortName>
    </alternativeName>
    <alternativeName>
        <fullName>Solute carrier family 9 member 1</fullName>
    </alternativeName>
</protein>
<sequence length="815" mass="90763">MVLRSGICGLSPHRIFPSLLVVVALVGLLPVLRSHGLQLSPTASTIRSSEPPRERSIGDVTTAPPEVTPESRPVNHSVTDHGMKPRKAFPVLGIDYTHVRTPFEISLWILLACLMKIGFHVIPTISSIVPESCLLIVVGLLVGGLIKGVGETPPFLQSDVFFLFLLPPIILDAGYFLPLRQFTENLGTILIFAVVGTLWNAFFLGGLMYAVCLVGGEQINNIGLLDNLLFGSIISAVDPVAVLAVFEEIHINELLHILVFGESLLNDAVTVVLYHLFEEFANYEHVGIVDIFLGFLSFFVVALGGVLVGVVYGVIAAFTSRFTSHIRVIEPLFVFLYSYMAYLSAELFHLSGIMALIASGVVMRPYVEANISHKSHTTIKYFLKMWSSVSETLIFIFLGVSTVAGSHHWNWTFVISTLLFCLIARVLGVLGLTWFINKFRIVKLTPKDQFIIAYGGLRGAIAFSLGYLLDKKHFPMCDLFLTAIITVIFFTVFVQGMTIRPLVDLLAVKKKQETKRSINEEIHTQFLDHLLTGIEDICGHYGHHHWKDKLNRFNKKYVKKCLIAGERSKEPQLIAFYHKMEMKQAIELVESGGMGKIPSAVSTVSMQNIHPKSLPSERILPALSKDKEEEIRKILRNNLQKTRQRLRSYNRHTLVADPYEEAWNQMLLRRQKARQLEQKINNYLTVPAHKLDSPTMSRARIGSDPLAYEPKEDLPVITIDPASPQSPESVDLVNEELKGKVLGLSRDPAKVAEEDEDDDGGIMMRSKETSSPGTDDVFTPAPSDSPSSQRIQRCLSDPGPHPEPGEGEPFFPKGQ</sequence>
<feature type="chain" id="PRO_0000052347" description="Sodium/hydrogen exchanger 1">
    <location>
        <begin position="1"/>
        <end position="815"/>
    </location>
</feature>
<feature type="topological domain" description="Extracellular" evidence="43">
    <location>
        <begin position="1"/>
        <end position="98"/>
    </location>
</feature>
<feature type="transmembrane region" description="Helical; Name=1" evidence="33 50">
    <location>
        <begin position="99"/>
        <end position="121"/>
    </location>
</feature>
<feature type="topological domain" description="Cytoplasmic" evidence="43">
    <location>
        <begin position="122"/>
        <end position="130"/>
    </location>
</feature>
<feature type="transmembrane region" description="Helical; Name=2" evidence="33 50">
    <location>
        <begin position="131"/>
        <end position="148"/>
    </location>
</feature>
<feature type="topological domain" description="Extracellular" evidence="43">
    <location>
        <begin position="149"/>
        <end position="158"/>
    </location>
</feature>
<feature type="transmembrane region" description="Helical; Name=3" evidence="33 50">
    <location>
        <begin position="159"/>
        <end position="176"/>
    </location>
</feature>
<feature type="topological domain" description="Cytoplasmic" evidence="43">
    <location>
        <begin position="177"/>
        <end position="186"/>
    </location>
</feature>
<feature type="transmembrane region" description="Helical; Name=4" evidence="33 50">
    <location>
        <begin position="187"/>
        <end position="215"/>
    </location>
</feature>
<feature type="topological domain" description="Extracellular" evidence="43">
    <location>
        <begin position="216"/>
        <end position="222"/>
    </location>
</feature>
<feature type="transmembrane region" description="Helical; Name=5" evidence="33 50">
    <location>
        <begin position="223"/>
        <end position="249"/>
    </location>
</feature>
<feature type="topological domain" description="Cytoplasmic" evidence="43">
    <location>
        <begin position="250"/>
        <end position="252"/>
    </location>
</feature>
<feature type="transmembrane region" description="Helical; Name=6" evidence="33 50">
    <location>
        <begin position="253"/>
        <end position="283"/>
    </location>
</feature>
<feature type="topological domain" description="Extracellular" evidence="43">
    <location>
        <begin position="284"/>
        <end position="287"/>
    </location>
</feature>
<feature type="transmembrane region" description="Helical; Name=7" evidence="33 50">
    <location>
        <begin position="288"/>
        <end position="322"/>
    </location>
</feature>
<feature type="topological domain" description="Cytoplasmic" evidence="43">
    <location>
        <begin position="323"/>
        <end position="328"/>
    </location>
</feature>
<feature type="transmembrane region" description="Helical; Name=8" evidence="33 50">
    <location>
        <begin position="329"/>
        <end position="341"/>
    </location>
</feature>
<feature type="topological domain" description="Extracellular" evidence="43">
    <location>
        <begin position="342"/>
        <end position="350"/>
    </location>
</feature>
<feature type="transmembrane region" description="Helical; Name=9" evidence="33 50">
    <location>
        <begin position="351"/>
        <end position="371"/>
    </location>
</feature>
<feature type="topological domain" description="Cytoplasmic" evidence="43">
    <location>
        <begin position="372"/>
        <end position="373"/>
    </location>
</feature>
<feature type="transmembrane region" description="Helical; Name=10" evidence="33 50">
    <location>
        <begin position="374"/>
        <end position="404"/>
    </location>
</feature>
<feature type="topological domain" description="Extracellular" evidence="43">
    <location>
        <begin position="405"/>
        <end position="410"/>
    </location>
</feature>
<feature type="transmembrane region" description="Helical; Name=11" evidence="33 50">
    <location>
        <begin position="411"/>
        <end position="438"/>
    </location>
</feature>
<feature type="topological domain" description="Cytoplasmic" evidence="43">
    <location>
        <begin position="439"/>
        <end position="444"/>
    </location>
</feature>
<feature type="transmembrane region" description="Helical; Name=12" evidence="33 50">
    <location>
        <begin position="445"/>
        <end position="469"/>
    </location>
</feature>
<feature type="topological domain" description="Extracellular" evidence="43">
    <location>
        <begin position="470"/>
        <end position="475"/>
    </location>
</feature>
<feature type="transmembrane region" description="Helical; Name=13" evidence="33 50">
    <location>
        <begin position="476"/>
        <end position="505"/>
    </location>
</feature>
<feature type="topological domain" description="Cytoplasmic" evidence="43">
    <location>
        <begin position="506"/>
        <end position="815"/>
    </location>
</feature>
<feature type="region of interest" description="Disordered" evidence="5">
    <location>
        <begin position="42"/>
        <end position="79"/>
    </location>
</feature>
<feature type="region of interest" description="Interaction with TESC" evidence="30">
    <location>
        <begin position="503"/>
        <end position="545"/>
    </location>
</feature>
<feature type="region of interest" description="PI(4,5)P2-binding region" evidence="1">
    <location>
        <begin position="509"/>
        <end position="516"/>
    </location>
</feature>
<feature type="region of interest" description="Interaction with CHP2" evidence="25">
    <location>
        <begin position="515"/>
        <end position="545"/>
    </location>
</feature>
<feature type="region of interest" description="Confers pH-dependent PI(4,5)P2 binding" evidence="28">
    <location>
        <begin position="540"/>
        <end position="545"/>
    </location>
</feature>
<feature type="region of interest" description="PI(4,5)P2-binding region" evidence="1">
    <location>
        <begin position="552"/>
        <end position="560"/>
    </location>
</feature>
<feature type="region of interest" description="Interaction with CALM1" evidence="30">
    <location>
        <begin position="633"/>
        <end position="815"/>
    </location>
</feature>
<feature type="region of interest" description="Interaction with TESC" evidence="12">
    <location>
        <begin position="633"/>
        <end position="815"/>
    </location>
</feature>
<feature type="region of interest" description="Interaction with PPP3CA" evidence="31">
    <location>
        <begin position="684"/>
        <end position="687"/>
    </location>
</feature>
<feature type="region of interest" description="Interaction with PPP3CA" evidence="31">
    <location>
        <begin position="715"/>
        <end position="720"/>
    </location>
</feature>
<feature type="region of interest" description="Disordered" evidence="5">
    <location>
        <begin position="744"/>
        <end position="815"/>
    </location>
</feature>
<feature type="compositionally biased region" description="Polar residues" evidence="5">
    <location>
        <begin position="782"/>
        <end position="791"/>
    </location>
</feature>
<feature type="site" description="Channel pore-lining" evidence="43">
    <location>
        <position position="161"/>
    </location>
</feature>
<feature type="site" description="Not glycosylated">
    <location>
        <position position="370"/>
    </location>
</feature>
<feature type="modified residue" description="Phosphoserine" evidence="58">
    <location>
        <position position="599"/>
    </location>
</feature>
<feature type="modified residue" description="Phosphoserine" evidence="57 58">
    <location>
        <position position="602"/>
    </location>
</feature>
<feature type="modified residue" description="Phosphothreonine" evidence="3">
    <location>
        <position position="603"/>
    </location>
</feature>
<feature type="modified residue" description="Phosphoserine" evidence="57">
    <location>
        <position position="605"/>
    </location>
</feature>
<feature type="modified residue" description="Phosphoserine" evidence="23">
    <location>
        <position position="648"/>
    </location>
</feature>
<feature type="modified residue" description="Phosphoserine" evidence="57">
    <location>
        <position position="693"/>
    </location>
</feature>
<feature type="modified residue" description="Phosphoserine" evidence="53">
    <location>
        <position position="697"/>
    </location>
</feature>
<feature type="modified residue" description="Phosphoserine" evidence="52 53 54 55 56 57 58">
    <location>
        <position position="703"/>
    </location>
</feature>
<feature type="modified residue" description="Phosphoserine" evidence="53">
    <location>
        <position position="723"/>
    </location>
</feature>
<feature type="modified residue" description="Phosphoserine" evidence="53">
    <location>
        <position position="726"/>
    </location>
</feature>
<feature type="modified residue" description="Phosphoserine" evidence="53">
    <location>
        <position position="729"/>
    </location>
</feature>
<feature type="modified residue" description="Phosphothreonine" evidence="31">
    <location>
        <position position="779"/>
    </location>
</feature>
<feature type="modified residue" description="Phosphoserine" evidence="53 57">
    <location>
        <position position="785"/>
    </location>
</feature>
<feature type="modified residue" description="Phosphoserine" evidence="3">
    <location>
        <position position="787"/>
    </location>
</feature>
<feature type="modified residue" description="Phosphoserine" evidence="1">
    <location>
        <position position="796"/>
    </location>
</feature>
<feature type="glycosylation site" description="O-linked (GalNAc...) threonine" evidence="4">
    <location>
        <position position="42"/>
    </location>
</feature>
<feature type="glycosylation site" description="O-linked (GalNAc...) serine" evidence="4">
    <location>
        <position position="56"/>
    </location>
</feature>
<feature type="glycosylation site" description="O-linked (GalNAc...) threonine" evidence="4">
    <location>
        <position position="61"/>
    </location>
</feature>
<feature type="glycosylation site" description="O-linked (GalNAc...) threonine" evidence="4">
    <location>
        <position position="62"/>
    </location>
</feature>
<feature type="glycosylation site" description="O-linked (GalNAc...) threonine" evidence="4">
    <location>
        <position position="68"/>
    </location>
</feature>
<feature type="glycosylation site" description="N-linked (GlcNAc...) asparagine" evidence="36">
    <location>
        <position position="75"/>
    </location>
</feature>
<feature type="splice variant" id="VSP_022101" description="In isoform 2." evidence="40">
    <original>GMTIRPLVDLLAVKKKQETKRSINEEIHTQFLDHLLTGIEDICGHYGHHHWKDKLNRFN</original>
    <variation>VLGQGRAGPCLGDPHRLFPWKERKACDLKCDSSPSSTTNLLCDLGRATPPFWASVSSIVK</variation>
    <location>
        <begin position="496"/>
        <end position="554"/>
    </location>
</feature>
<feature type="splice variant" id="VSP_022102" description="In isoform 2." evidence="40">
    <location>
        <begin position="555"/>
        <end position="815"/>
    </location>
</feature>
<feature type="sequence variant" id="VAR_073439" description="In LIKNS; causes reduced expression of the mutant protein; hypoglycosylated; does not localize properly at the plasma membrane; small residual activity; dbSNP:rs786204831." evidence="27">
    <original>G</original>
    <variation>R</variation>
    <location>
        <position position="305"/>
    </location>
</feature>
<feature type="sequence variant" id="VAR_082153" description="In LIKNS; uncertain significance." evidence="29">
    <original>G</original>
    <variation>E</variation>
    <location>
        <position position="313"/>
    </location>
</feature>
<feature type="sequence variant" id="VAR_050231" description="In dbSNP:rs35703140.">
    <original>N</original>
    <variation>K</variation>
    <location>
        <position position="682"/>
    </location>
</feature>
<feature type="mutagenesis site" description="Almost complete loss of activity." evidence="18">
    <original>F</original>
    <variation>C</variation>
    <location>
        <position position="155"/>
    </location>
</feature>
<feature type="mutagenesis site" description="Almost complete loss of activity." evidence="18">
    <original>L</original>
    <variation>C</variation>
    <location>
        <position position="156"/>
    </location>
</feature>
<feature type="mutagenesis site" description="Reduces activity." evidence="18">
    <original>Q</original>
    <variation>C</variation>
    <location>
        <position position="157"/>
    </location>
</feature>
<feature type="mutagenesis site" description="Almost complete loss of activity." evidence="18">
    <original>S</original>
    <variation>C</variation>
    <location>
        <position position="158"/>
    </location>
</feature>
<feature type="mutagenesis site" description="Almost complete loss of activity." evidence="18">
    <original>D</original>
    <variation>C</variation>
    <location>
        <position position="159"/>
    </location>
</feature>
<feature type="mutagenesis site" description="Reduces activity." evidence="18">
    <original>V</original>
    <variation>C</variation>
    <location>
        <position position="160"/>
    </location>
</feature>
<feature type="mutagenesis site" description="Reduces activity." evidence="18">
    <original>F</original>
    <variation>C</variation>
    <location>
        <position position="161"/>
    </location>
</feature>
<feature type="mutagenesis site" description="Almost complete loss of activity." evidence="18">
    <original>F</original>
    <variation>C</variation>
    <location>
        <position position="162"/>
    </location>
</feature>
<feature type="mutagenesis site" description="Reduces activity." evidence="18">
    <original>L</original>
    <variation>C</variation>
    <location>
        <position position="163"/>
    </location>
</feature>
<feature type="mutagenesis site" description="Almost complete loss of activity." evidence="18">
    <original>F</original>
    <variation>C</variation>
    <location>
        <position position="164"/>
    </location>
</feature>
<feature type="mutagenesis site" description="Reduces activity." evidence="18">
    <original>L</original>
    <variation>C</variation>
    <location>
        <position position="165"/>
    </location>
</feature>
<feature type="mutagenesis site" description="Reduces activity." evidence="18">
    <original>L</original>
    <variation>C</variation>
    <location>
        <position position="166"/>
    </location>
</feature>
<feature type="mutagenesis site" description="Reduces activity." evidence="14 18">
    <original>P</original>
    <variation>A</variation>
    <location>
        <position position="167"/>
    </location>
</feature>
<feature type="mutagenesis site" description="Almost complete loss of activity. Reduces membrane localization." evidence="14 18">
    <original>P</original>
    <variation>C</variation>
    <variation>G</variation>
    <location>
        <position position="167"/>
    </location>
</feature>
<feature type="mutagenesis site" description="Almost complete loss of activity." evidence="14 18">
    <original>P</original>
    <variation>A</variation>
    <variation>C</variation>
    <location>
        <position position="168"/>
    </location>
</feature>
<feature type="mutagenesis site" description="Reduces activity." evidence="14 18">
    <original>P</original>
    <variation>G</variation>
    <location>
        <position position="168"/>
    </location>
</feature>
<feature type="mutagenesis site" description="Reduces activity." evidence="18">
    <original>I</original>
    <variation>C</variation>
    <location>
        <position position="169"/>
    </location>
</feature>
<feature type="mutagenesis site" description="Reduces activity." evidence="18">
    <original>I</original>
    <variation>C</variation>
    <location>
        <position position="170"/>
    </location>
</feature>
<feature type="mutagenesis site" description="Reduces activity." evidence="18">
    <original>L</original>
    <variation>C</variation>
    <location>
        <position position="171"/>
    </location>
</feature>
<feature type="mutagenesis site" description="Almost complete loss of activity." evidence="18">
    <original>D</original>
    <variation>C</variation>
    <location>
        <position position="172"/>
    </location>
</feature>
<feature type="mutagenesis site" description="Reduces activity." evidence="18">
    <original>A</original>
    <variation>C</variation>
    <location>
        <position position="173"/>
    </location>
</feature>
<feature type="mutagenesis site" description="Reduces activity." evidence="18">
    <original>G</original>
    <variation>C</variation>
    <location>
        <position position="174"/>
    </location>
</feature>
<feature type="mutagenesis site" description="Almost complete loss of activity." evidence="18">
    <original>Y</original>
    <variation>C</variation>
    <location>
        <position position="175"/>
    </location>
</feature>
<feature type="mutagenesis site" description="Almost complete loss of activity." evidence="18">
    <original>F</original>
    <variation>C</variation>
    <location>
        <position position="176"/>
    </location>
</feature>
<feature type="mutagenesis site" description="Reduces activity." evidence="18">
    <original>L</original>
    <variation>C</variation>
    <location>
        <position position="177"/>
    </location>
</feature>
<feature type="mutagenesis site" description="Reduces activity." evidence="6">
    <original>R</original>
    <variation>C</variation>
    <location>
        <position position="180"/>
    </location>
</feature>
<feature type="mutagenesis site" description="Reduces activity." evidence="6">
    <original>Q</original>
    <variation>C</variation>
    <location>
        <position position="181"/>
    </location>
</feature>
<feature type="mutagenesis site" description="Does not affect membrane localization. Does not affect sodium:proton antiporter activity. Decreases sodium:proton antiporter activity; when associated with N-226. Reduces Vmax for Na(+) and Li(+); when associated with D-226." evidence="32">
    <original>E</original>
    <variation>A</variation>
    <variation>Q</variation>
    <location>
        <position position="217"/>
    </location>
</feature>
<feature type="mutagenesis site" description="Does not affect membrane localization. Does not affect sodium:proton antiporter activity." evidence="32">
    <original>D</original>
    <variation>A</variation>
    <location>
        <position position="226"/>
    </location>
</feature>
<feature type="mutagenesis site" description="Does not affect membrane localization. Decreases sodium:proton antiporter activity. Reduces Vmax and Km for Na(+) and a slightly reduced Vmax and Km for Li(+). Decreases sodium:proton antiporter activity; when associated with Q-217. Reduces Vmax for Na(+) and Li(+); when associated with Q-217.">
    <original>D</original>
    <variation>N</variation>
    <location>
        <position position="226"/>
    </location>
</feature>
<feature type="mutagenesis site" description="Does not affect sodium:proton antiporter activity." evidence="33">
    <original>D</original>
    <variation>A</variation>
    <location>
        <position position="238"/>
    </location>
</feature>
<feature type="mutagenesis site" description="Does not affect membrane localization. Abolishes sodium:proton antiporter activity." evidence="21">
    <original>E</original>
    <variation>I</variation>
    <location>
        <position position="262"/>
    </location>
</feature>
<feature type="mutagenesis site" description="Abolishes sodium:proton antiporter activity." evidence="9">
    <original>E</original>
    <variation>Q</variation>
    <location>
        <position position="262"/>
    </location>
</feature>
<feature type="mutagenesis site" description="Abolishes sodium:proton antiporter activity." evidence="9">
    <original>D</original>
    <variation>N</variation>
    <location>
        <position position="267"/>
    </location>
</feature>
<feature type="mutagenesis site" description="Abolishes membrane localization." evidence="21">
    <original>G</original>
    <variation>V</variation>
    <location>
        <position position="309"/>
    </location>
</feature>
<feature type="mutagenesis site" description="Abolishes plasma membrane localization. Reduces greatly sodium:proton antiporter activity." evidence="9">
    <original>E</original>
    <variation>Q</variation>
    <location>
        <position position="391"/>
    </location>
</feature>
<feature type="mutagenesis site" description="Reduces interaction with CHP1 and the exchange activity; when associated with Q-522." evidence="7">
    <original>I</original>
    <variation>Q</variation>
    <location>
        <position position="518"/>
    </location>
</feature>
<feature type="mutagenesis site" description="Reduces interaction with CHP1 and the exchange activity; when associated with Q-518." evidence="7">
    <original>I</original>
    <variation>Q</variation>
    <location>
        <position position="522"/>
    </location>
</feature>
<feature type="mutagenesis site" description="Inhibits interaction with CHP1 and the exchange activity. CHPI does not localize at the cell membrane. Abolishes interaction with TESC." evidence="7 30">
    <original>FLDHLL</original>
    <variation>QQDHQQ</variation>
    <location>
        <begin position="526"/>
        <end position="531"/>
    </location>
</feature>
<feature type="mutagenesis site" description="Inhibits interaction with CHP1 and the exchange activity. CHPI does not localize at the cell membrane." evidence="7">
    <original>FLDHLL</original>
    <variation>RRDHRR</variation>
    <location>
        <begin position="526"/>
        <end position="531"/>
    </location>
</feature>
<feature type="mutagenesis site" description="Reduces interaction with CHP1 and the exchange activity; when associated with Q-527." evidence="7">
    <original>F</original>
    <variation>Q</variation>
    <location>
        <position position="526"/>
    </location>
</feature>
<feature type="mutagenesis site" description="Reduces interaction with CHP1 and the exchange activity; when associated with Q-526." evidence="7">
    <original>L</original>
    <variation>Q</variation>
    <location>
        <position position="527"/>
    </location>
</feature>
<feature type="mutagenesis site" description="Reduces interaction with CHP1 and the exchange activity; when associated with Q-531." evidence="7">
    <original>L</original>
    <variation>Q</variation>
    <location>
        <position position="530"/>
    </location>
</feature>
<feature type="mutagenesis site" description="Reduces interaction with CHP1 and the exchange activity; when associated with Q-530." evidence="7">
    <original>L</original>
    <variation>Q</variation>
    <location>
        <position position="531"/>
    </location>
</feature>
<feature type="mutagenesis site" description="Strongly reduced interaction with CHP2." evidence="19">
    <original>I</original>
    <variation>D</variation>
    <variation>K</variation>
    <location>
        <position position="534"/>
    </location>
</feature>
<feature type="mutagenesis site" description="Strongly reduced interaction with CHP2." evidence="19">
    <original>I</original>
    <variation>K</variation>
    <location>
        <position position="537"/>
    </location>
</feature>
<feature type="mutagenesis site" description="Decreases sodium:proton antiporter activity by 50%; when associated with A-578." evidence="33">
    <original>Y</original>
    <variation>A</variation>
    <location>
        <position position="577"/>
    </location>
</feature>
<feature type="mutagenesis site" description="Decreases sodium:proton antiporter activity by 50%; when associated with A-577." evidence="33">
    <original>H</original>
    <variation>A</variation>
    <location>
        <position position="578"/>
    </location>
</feature>
<feature type="mutagenesis site" description="Does not affect plasma membrane localization." evidence="31">
    <original>T</original>
    <variation>A</variation>
    <location>
        <position position="779"/>
    </location>
</feature>
<feature type="mutagenesis site" description="Does not affect plasma membrane localization." evidence="31">
    <original>T</original>
    <variation>D</variation>
    <location>
        <position position="779"/>
    </location>
</feature>
<feature type="strand" evidence="63">
    <location>
        <begin position="89"/>
        <end position="91"/>
    </location>
</feature>
<feature type="strand" evidence="63">
    <location>
        <begin position="97"/>
        <end position="100"/>
    </location>
</feature>
<feature type="helix" evidence="63">
    <location>
        <begin position="101"/>
        <end position="120"/>
    </location>
</feature>
<feature type="turn" evidence="63">
    <location>
        <begin position="126"/>
        <end position="128"/>
    </location>
</feature>
<feature type="helix" evidence="63">
    <location>
        <begin position="131"/>
        <end position="149"/>
    </location>
</feature>
<feature type="helix" evidence="63">
    <location>
        <begin position="160"/>
        <end position="164"/>
    </location>
</feature>
<feature type="helix" evidence="63">
    <location>
        <begin position="166"/>
        <end position="175"/>
    </location>
</feature>
<feature type="turn" evidence="63">
    <location>
        <begin position="180"/>
        <end position="182"/>
    </location>
</feature>
<feature type="helix" evidence="63">
    <location>
        <begin position="183"/>
        <end position="185"/>
    </location>
</feature>
<feature type="helix" evidence="63">
    <location>
        <begin position="186"/>
        <end position="214"/>
    </location>
</feature>
<feature type="strand" evidence="63">
    <location>
        <begin position="217"/>
        <end position="221"/>
    </location>
</feature>
<feature type="helix" evidence="63">
    <location>
        <begin position="225"/>
        <end position="234"/>
    </location>
</feature>
<feature type="helix" evidence="63">
    <location>
        <begin position="239"/>
        <end position="245"/>
    </location>
</feature>
<feature type="turn" evidence="64">
    <location>
        <begin position="247"/>
        <end position="250"/>
    </location>
</feature>
<feature type="helix" evidence="63">
    <location>
        <begin position="253"/>
        <end position="280"/>
    </location>
</feature>
<feature type="strand" evidence="64">
    <location>
        <begin position="282"/>
        <end position="285"/>
    </location>
</feature>
<feature type="helix" evidence="63">
    <location>
        <begin position="288"/>
        <end position="320"/>
    </location>
</feature>
<feature type="helix" evidence="64">
    <location>
        <begin position="327"/>
        <end position="329"/>
    </location>
</feature>
<feature type="helix" evidence="63">
    <location>
        <begin position="330"/>
        <end position="347"/>
    </location>
</feature>
<feature type="helix" evidence="63">
    <location>
        <begin position="352"/>
        <end position="366"/>
    </location>
</feature>
<feature type="strand" evidence="63">
    <location>
        <begin position="367"/>
        <end position="371"/>
    </location>
</feature>
<feature type="helix" evidence="63">
    <location>
        <begin position="373"/>
        <end position="403"/>
    </location>
</feature>
<feature type="helix" evidence="63">
    <location>
        <begin position="411"/>
        <end position="436"/>
    </location>
</feature>
<feature type="turn" evidence="63">
    <location>
        <begin position="437"/>
        <end position="439"/>
    </location>
</feature>
<feature type="strand" evidence="62">
    <location>
        <begin position="440"/>
        <end position="442"/>
    </location>
</feature>
<feature type="helix" evidence="63">
    <location>
        <begin position="446"/>
        <end position="453"/>
    </location>
</feature>
<feature type="helix" evidence="63">
    <location>
        <begin position="462"/>
        <end position="467"/>
    </location>
</feature>
<feature type="strand" evidence="63">
    <location>
        <begin position="471"/>
        <end position="473"/>
    </location>
</feature>
<feature type="helix" evidence="63">
    <location>
        <begin position="477"/>
        <end position="493"/>
    </location>
</feature>
<feature type="turn" evidence="63">
    <location>
        <begin position="494"/>
        <end position="498"/>
    </location>
</feature>
<feature type="helix" evidence="63">
    <location>
        <begin position="500"/>
        <end position="504"/>
    </location>
</feature>
<feature type="helix" evidence="59">
    <location>
        <begin position="518"/>
        <end position="538"/>
    </location>
</feature>
<feature type="helix" evidence="62">
    <location>
        <begin position="544"/>
        <end position="557"/>
    </location>
</feature>
<feature type="strand" evidence="64">
    <location>
        <begin position="558"/>
        <end position="562"/>
    </location>
</feature>
<feature type="helix" evidence="64">
    <location>
        <begin position="572"/>
        <end position="590"/>
    </location>
</feature>
<feature type="helix" evidence="60">
    <location>
        <begin position="625"/>
        <end position="651"/>
    </location>
</feature>
<feature type="helix" evidence="60">
    <location>
        <begin position="658"/>
        <end position="681"/>
    </location>
</feature>
<feature type="turn" evidence="60">
    <location>
        <begin position="682"/>
        <end position="684"/>
    </location>
</feature>
<feature type="strand" evidence="61">
    <location>
        <begin position="716"/>
        <end position="720"/>
    </location>
</feature>
<organism>
    <name type="scientific">Homo sapiens</name>
    <name type="common">Human</name>
    <dbReference type="NCBI Taxonomy" id="9606"/>
    <lineage>
        <taxon>Eukaryota</taxon>
        <taxon>Metazoa</taxon>
        <taxon>Chordata</taxon>
        <taxon>Craniata</taxon>
        <taxon>Vertebrata</taxon>
        <taxon>Euteleostomi</taxon>
        <taxon>Mammalia</taxon>
        <taxon>Eutheria</taxon>
        <taxon>Euarchontoglires</taxon>
        <taxon>Primates</taxon>
        <taxon>Haplorrhini</taxon>
        <taxon>Catarrhini</taxon>
        <taxon>Hominidae</taxon>
        <taxon>Homo</taxon>
    </lineage>
</organism>
<evidence type="ECO:0000250" key="1">
    <source>
        <dbReference type="UniProtKB" id="P26431"/>
    </source>
</evidence>
<evidence type="ECO:0000250" key="2">
    <source>
        <dbReference type="UniProtKB" id="P48762"/>
    </source>
</evidence>
<evidence type="ECO:0000250" key="3">
    <source>
        <dbReference type="UniProtKB" id="Q61165"/>
    </source>
</evidence>
<evidence type="ECO:0000255" key="4"/>
<evidence type="ECO:0000256" key="5">
    <source>
        <dbReference type="SAM" id="MobiDB-lite"/>
    </source>
</evidence>
<evidence type="ECO:0000269" key="6">
    <source>
    </source>
</evidence>
<evidence type="ECO:0000269" key="7">
    <source>
    </source>
</evidence>
<evidence type="ECO:0000269" key="8">
    <source>
    </source>
</evidence>
<evidence type="ECO:0000269" key="9">
    <source>
    </source>
</evidence>
<evidence type="ECO:0000269" key="10">
    <source>
    </source>
</evidence>
<evidence type="ECO:0000269" key="11">
    <source>
    </source>
</evidence>
<evidence type="ECO:0000269" key="12">
    <source>
    </source>
</evidence>
<evidence type="ECO:0000269" key="13">
    <source>
    </source>
</evidence>
<evidence type="ECO:0000269" key="14">
    <source>
    </source>
</evidence>
<evidence type="ECO:0000269" key="15">
    <source>
    </source>
</evidence>
<evidence type="ECO:0000269" key="16">
    <source>
    </source>
</evidence>
<evidence type="ECO:0000269" key="17">
    <source>
    </source>
</evidence>
<evidence type="ECO:0000269" key="18">
    <source>
    </source>
</evidence>
<evidence type="ECO:0000269" key="19">
    <source>
    </source>
</evidence>
<evidence type="ECO:0000269" key="20">
    <source>
    </source>
</evidence>
<evidence type="ECO:0000269" key="21">
    <source>
    </source>
</evidence>
<evidence type="ECO:0000269" key="22">
    <source>
    </source>
</evidence>
<evidence type="ECO:0000269" key="23">
    <source>
    </source>
</evidence>
<evidence type="ECO:0000269" key="24">
    <source>
    </source>
</evidence>
<evidence type="ECO:0000269" key="25">
    <source>
    </source>
</evidence>
<evidence type="ECO:0000269" key="26">
    <source>
    </source>
</evidence>
<evidence type="ECO:0000269" key="27">
    <source>
    </source>
</evidence>
<evidence type="ECO:0000269" key="28">
    <source>
    </source>
</evidence>
<evidence type="ECO:0000269" key="29">
    <source>
    </source>
</evidence>
<evidence type="ECO:0000269" key="30">
    <source>
    </source>
</evidence>
<evidence type="ECO:0000269" key="31">
    <source>
    </source>
</evidence>
<evidence type="ECO:0000269" key="32">
    <source>
    </source>
</evidence>
<evidence type="ECO:0000269" key="33">
    <source>
    </source>
</evidence>
<evidence type="ECO:0000269" key="34">
    <source>
    </source>
</evidence>
<evidence type="ECO:0000269" key="35">
    <source>
    </source>
</evidence>
<evidence type="ECO:0000269" key="36">
    <source>
    </source>
</evidence>
<evidence type="ECO:0000269" key="37">
    <source>
    </source>
</evidence>
<evidence type="ECO:0000269" key="38">
    <source>
    </source>
</evidence>
<evidence type="ECO:0000269" key="39">
    <source>
    </source>
</evidence>
<evidence type="ECO:0000303" key="40">
    <source>
    </source>
</evidence>
<evidence type="ECO:0000303" key="41">
    <source>
    </source>
</evidence>
<evidence type="ECO:0000303" key="42">
    <source>
    </source>
</evidence>
<evidence type="ECO:0000305" key="43"/>
<evidence type="ECO:0000305" key="44">
    <source>
    </source>
</evidence>
<evidence type="ECO:0000312" key="45">
    <source>
        <dbReference type="HGNC" id="HGNC:11071"/>
    </source>
</evidence>
<evidence type="ECO:0007744" key="46">
    <source>
        <dbReference type="PDB" id="6NUC"/>
    </source>
</evidence>
<evidence type="ECO:0007744" key="47">
    <source>
        <dbReference type="PDB" id="6NUF"/>
    </source>
</evidence>
<evidence type="ECO:0007744" key="48">
    <source>
        <dbReference type="PDB" id="6NUU"/>
    </source>
</evidence>
<evidence type="ECO:0007744" key="49">
    <source>
        <dbReference type="PDB" id="7DSV"/>
    </source>
</evidence>
<evidence type="ECO:0007744" key="50">
    <source>
        <dbReference type="PDB" id="7DSW"/>
    </source>
</evidence>
<evidence type="ECO:0007744" key="51">
    <source>
        <dbReference type="PDB" id="7DSX"/>
    </source>
</evidence>
<evidence type="ECO:0007744" key="52">
    <source>
    </source>
</evidence>
<evidence type="ECO:0007744" key="53">
    <source>
    </source>
</evidence>
<evidence type="ECO:0007744" key="54">
    <source>
    </source>
</evidence>
<evidence type="ECO:0007744" key="55">
    <source>
    </source>
</evidence>
<evidence type="ECO:0007744" key="56">
    <source>
    </source>
</evidence>
<evidence type="ECO:0007744" key="57">
    <source>
    </source>
</evidence>
<evidence type="ECO:0007744" key="58">
    <source>
    </source>
</evidence>
<evidence type="ECO:0007829" key="59">
    <source>
        <dbReference type="PDB" id="2BEC"/>
    </source>
</evidence>
<evidence type="ECO:0007829" key="60">
    <source>
        <dbReference type="PDB" id="2YGG"/>
    </source>
</evidence>
<evidence type="ECO:0007829" key="61">
    <source>
        <dbReference type="PDB" id="6NUC"/>
    </source>
</evidence>
<evidence type="ECO:0007829" key="62">
    <source>
        <dbReference type="PDB" id="7DSV"/>
    </source>
</evidence>
<evidence type="ECO:0007829" key="63">
    <source>
        <dbReference type="PDB" id="7DSW"/>
    </source>
</evidence>
<evidence type="ECO:0007829" key="64">
    <source>
        <dbReference type="PDB" id="7DSX"/>
    </source>
</evidence>
<proteinExistence type="evidence at protein level"/>